<reference key="1">
    <citation type="journal article" date="1988" name="Proc. Natl. Acad. Sci. U.S.A.">
        <title>Cloning and sequencing of cDNA encoding human DNA topoisomerase II and localization of the gene to chromosome region 17q21-22.</title>
        <authorList>
            <person name="Tsai-Pflugfelder M."/>
            <person name="Liu L.F."/>
            <person name="Liu A.A."/>
            <person name="Tewey K.M."/>
            <person name="Whang-Peng J."/>
            <person name="Knutsen T."/>
            <person name="Huebner K."/>
            <person name="Croce C.M."/>
            <person name="Wang J.C."/>
        </authorList>
    </citation>
    <scope>NUCLEOTIDE SEQUENCE [MRNA] (ISOFORM 1)</scope>
</reference>
<reference key="2">
    <citation type="journal article" date="1993" name="Cancer Res.">
        <title>Use of yeast in the study of anticancer drugs targeting DNA topoisomerases: expression of a functional recombinant human DNA topoisomerase II alpha in yeast.</title>
        <authorList>
            <person name="Wasserman R.A."/>
            <person name="Austin C.A."/>
            <person name="Fisher L.M."/>
            <person name="Wang J.C."/>
        </authorList>
    </citation>
    <scope>SEQUENCE REVISION TO 109-114</scope>
</reference>
<reference key="3">
    <citation type="journal article" date="1998" name="Gene">
        <title>Structural organization of the human TOP2A and TOP2B genes.</title>
        <authorList>
            <person name="Lang A.J."/>
            <person name="Mirski S.E."/>
            <person name="Cummings H.J."/>
            <person name="Yu Q."/>
            <person name="Gerlach J.H."/>
            <person name="Cole S.P."/>
        </authorList>
    </citation>
    <scope>NUCLEOTIDE SEQUENCE [GENOMIC DNA] (ISOFORM 1)</scope>
</reference>
<reference key="4">
    <citation type="journal article" date="1999" name="Biochim. Biophys. Acta">
        <title>Molecular cloning and characterization of the human topoisomerase IIalpha and IIbeta genes: evidence for isoform evolution through gene duplication.</title>
        <authorList>
            <person name="Sng J.H."/>
            <person name="Heaton V.J."/>
            <person name="Bell M."/>
            <person name="Mani P."/>
            <person name="Austin C.A."/>
            <person name="Fisher L.M."/>
        </authorList>
    </citation>
    <scope>NUCLEOTIDE SEQUENCE [GENOMIC DNA] (ISOFORM 1)</scope>
</reference>
<reference key="5">
    <citation type="journal article" date="2006" name="Nature">
        <title>DNA sequence of human chromosome 17 and analysis of rearrangement in the human lineage.</title>
        <authorList>
            <person name="Zody M.C."/>
            <person name="Garber M."/>
            <person name="Adams D.J."/>
            <person name="Sharpe T."/>
            <person name="Harrow J."/>
            <person name="Lupski J.R."/>
            <person name="Nicholson C."/>
            <person name="Searle S.M."/>
            <person name="Wilming L."/>
            <person name="Young S.K."/>
            <person name="Abouelleil A."/>
            <person name="Allen N.R."/>
            <person name="Bi W."/>
            <person name="Bloom T."/>
            <person name="Borowsky M.L."/>
            <person name="Bugalter B.E."/>
            <person name="Butler J."/>
            <person name="Chang J.L."/>
            <person name="Chen C.-K."/>
            <person name="Cook A."/>
            <person name="Corum B."/>
            <person name="Cuomo C.A."/>
            <person name="de Jong P.J."/>
            <person name="DeCaprio D."/>
            <person name="Dewar K."/>
            <person name="FitzGerald M."/>
            <person name="Gilbert J."/>
            <person name="Gibson R."/>
            <person name="Gnerre S."/>
            <person name="Goldstein S."/>
            <person name="Grafham D.V."/>
            <person name="Grocock R."/>
            <person name="Hafez N."/>
            <person name="Hagopian D.S."/>
            <person name="Hart E."/>
            <person name="Norman C.H."/>
            <person name="Humphray S."/>
            <person name="Jaffe D.B."/>
            <person name="Jones M."/>
            <person name="Kamal M."/>
            <person name="Khodiyar V.K."/>
            <person name="LaButti K."/>
            <person name="Laird G."/>
            <person name="Lehoczky J."/>
            <person name="Liu X."/>
            <person name="Lokyitsang T."/>
            <person name="Loveland J."/>
            <person name="Lui A."/>
            <person name="Macdonald P."/>
            <person name="Major J.E."/>
            <person name="Matthews L."/>
            <person name="Mauceli E."/>
            <person name="McCarroll S.A."/>
            <person name="Mihalev A.H."/>
            <person name="Mudge J."/>
            <person name="Nguyen C."/>
            <person name="Nicol R."/>
            <person name="O'Leary S.B."/>
            <person name="Osoegawa K."/>
            <person name="Schwartz D.C."/>
            <person name="Shaw-Smith C."/>
            <person name="Stankiewicz P."/>
            <person name="Steward C."/>
            <person name="Swarbreck D."/>
            <person name="Venkataraman V."/>
            <person name="Whittaker C.A."/>
            <person name="Yang X."/>
            <person name="Zimmer A.R."/>
            <person name="Bradley A."/>
            <person name="Hubbard T."/>
            <person name="Birren B.W."/>
            <person name="Rogers J."/>
            <person name="Lander E.S."/>
            <person name="Nusbaum C."/>
        </authorList>
    </citation>
    <scope>NUCLEOTIDE SEQUENCE [LARGE SCALE GENOMIC DNA]</scope>
</reference>
<reference key="6">
    <citation type="submission" date="2005-07" db="EMBL/GenBank/DDBJ databases">
        <authorList>
            <person name="Mural R.J."/>
            <person name="Istrail S."/>
            <person name="Sutton G.G."/>
            <person name="Florea L."/>
            <person name="Halpern A.L."/>
            <person name="Mobarry C.M."/>
            <person name="Lippert R."/>
            <person name="Walenz B."/>
            <person name="Shatkay H."/>
            <person name="Dew I."/>
            <person name="Miller J.R."/>
            <person name="Flanigan M.J."/>
            <person name="Edwards N.J."/>
            <person name="Bolanos R."/>
            <person name="Fasulo D."/>
            <person name="Halldorsson B.V."/>
            <person name="Hannenhalli S."/>
            <person name="Turner R."/>
            <person name="Yooseph S."/>
            <person name="Lu F."/>
            <person name="Nusskern D.R."/>
            <person name="Shue B.C."/>
            <person name="Zheng X.H."/>
            <person name="Zhong F."/>
            <person name="Delcher A.L."/>
            <person name="Huson D.H."/>
            <person name="Kravitz S.A."/>
            <person name="Mouchard L."/>
            <person name="Reinert K."/>
            <person name="Remington K.A."/>
            <person name="Clark A.G."/>
            <person name="Waterman M.S."/>
            <person name="Eichler E.E."/>
            <person name="Adams M.D."/>
            <person name="Hunkapiller M.W."/>
            <person name="Myers E.W."/>
            <person name="Venter J.C."/>
        </authorList>
    </citation>
    <scope>NUCLEOTIDE SEQUENCE [LARGE SCALE GENOMIC DNA]</scope>
</reference>
<reference key="7">
    <citation type="journal article" date="2004" name="Genome Res.">
        <title>The status, quality, and expansion of the NIH full-length cDNA project: the Mammalian Gene Collection (MGC).</title>
        <authorList>
            <consortium name="The MGC Project Team"/>
        </authorList>
    </citation>
    <scope>NUCLEOTIDE SEQUENCE [LARGE SCALE MRNA] (ISOFORM 1)</scope>
</reference>
<reference key="8">
    <citation type="submission" date="2000-07" db="EMBL/GenBank/DDBJ databases">
        <title>Two differentially spliced forms of topoisomerase II alpha and beta mRNAs are conserved between birds and humans.</title>
        <authorList>
            <person name="Petruti-Mot A.S."/>
            <person name="Earnshaw W.C."/>
        </authorList>
    </citation>
    <scope>NUCLEOTIDE SEQUENCE [MRNA] OF 1-500 (ISOFORMS 2; 3 AND 4)</scope>
</reference>
<reference key="9">
    <citation type="submission" date="1998-06" db="EMBL/GenBank/DDBJ databases">
        <authorList>
            <person name="Neri S."/>
            <person name="Govoni M."/>
            <person name="Perrotta L."/>
            <person name="Pozzi S."/>
            <person name="Pession A."/>
        </authorList>
    </citation>
    <scope>NUCLEOTIDE SEQUENCE [GENOMIC DNA] OF 1-21 AND 48-72</scope>
</reference>
<reference key="10">
    <citation type="submission" date="2008-12" db="UniProtKB">
        <authorList>
            <person name="Bienvenut W.V."/>
            <person name="Lilla S."/>
            <person name="von Kriegsheim A."/>
            <person name="Lempens A."/>
            <person name="Kolch W."/>
        </authorList>
    </citation>
    <scope>PROTEIN SEQUENCE OF 1-17; 74-96; 124-131; 169-184; 243-251; 277-287; 325-336; 387-397; 467-478; 481-487; 500-519; 569-579; 702-713; 805-815; 828-835; 864-877; 937-958; 1021-1026 AND 1185-1196</scope>
    <scope>ACETYLATION AT MET-1</scope>
    <scope>IDENTIFICATION BY MASS SPECTROMETRY</scope>
    <source>
        <tissue>Ovarian carcinoma</tissue>
    </source>
</reference>
<reference key="11">
    <citation type="submission" date="2009-03" db="UniProtKB">
        <authorList>
            <person name="Bienvenut W.V."/>
            <person name="Waridel P."/>
            <person name="Quadroni M."/>
        </authorList>
    </citation>
    <scope>PROTEIN SEQUENCE OF 135-157; 228-241; 307-321; 325-336; 387-397; 401-416; 467-478; 536-550; 569-579; 640-655; 702-713; 805-815; 1011-1020; 1097-1114; 1169-1184; 1239-1259 AND 1374-1411</scope>
    <scope>PHOSPHORYLATION AT SER-1106</scope>
    <scope>IDENTIFICATION BY MASS SPECTROMETRY</scope>
    <source>
        <tissue>Cervix carcinoma</tissue>
    </source>
</reference>
<reference key="12">
    <citation type="journal article" date="1994" name="Exp. Cell Res.">
        <title>Discrete localization of different DNA topoisomerases in HeLa and K562 cell nuclei and subnuclear fractions.</title>
        <authorList>
            <person name="Zini N."/>
            <person name="Santi S."/>
            <person name="Ognibene A."/>
            <person name="Bavelloni A."/>
            <person name="Neri L.M."/>
            <person name="Valmori A."/>
            <person name="Mariani E."/>
            <person name="Negri C."/>
            <person name="Astaldi-Ricotti G.C."/>
            <person name="Maraldi N.M."/>
        </authorList>
    </citation>
    <scope>SUBCELLULAR LOCATION</scope>
</reference>
<reference key="13">
    <citation type="journal article" date="1997" name="Br. J. Cancer">
        <title>The distribution and expression of the two isoforms of DNA topoisomerase II in normal and neoplastic human tissues.</title>
        <authorList>
            <person name="Turley H."/>
            <person name="Comley M."/>
            <person name="Houlbrook S."/>
            <person name="Nozaki N."/>
            <person name="Kikuchi A."/>
            <person name="Hickson I.D."/>
            <person name="Gatter K."/>
            <person name="Harris A.L."/>
        </authorList>
    </citation>
    <scope>SUBCELLULAR LOCATION</scope>
    <scope>TISSUE SPECIFICITY</scope>
</reference>
<reference key="14">
    <citation type="journal article" date="2000" name="J. Biol. Chem.">
        <title>Mitotic phosphorylation of DNA topoisomerase II alpha by protein kinase CK2 creates the MPM-2 phosphoepitope on Ser-1469.</title>
        <authorList>
            <person name="Escargueil A.E."/>
            <person name="Plisov S.Y."/>
            <person name="Filhol O."/>
            <person name="Cochet C."/>
            <person name="Larsen A.K."/>
        </authorList>
    </citation>
    <scope>PHOSPHORYLATION AT SER-1469</scope>
    <scope>MUTAGENESIS OF SER-1469</scope>
</reference>
<reference key="15">
    <citation type="journal article" date="2003" name="Biochem. Biophys. Res. Commun.">
        <title>Identification of functional nuclear export sequences in human topoisomerase IIalpha and beta.</title>
        <authorList>
            <person name="Mirski S.E."/>
            <person name="Bielawski J.C."/>
            <person name="Cole S.P."/>
        </authorList>
    </citation>
    <scope>NUCLEAR EXPORT SIGNAL</scope>
</reference>
<reference key="16">
    <citation type="journal article" date="2003" name="Nucleic Acids Res.">
        <title>RNA helicase A interacts with dsDNA and topoisomerase IIalpha.</title>
        <authorList>
            <person name="Zhou K."/>
            <person name="Choe K.-T."/>
            <person name="Zaidi Z."/>
            <person name="Wang Q."/>
            <person name="Mathews M.B."/>
            <person name="Lee C.-G."/>
        </authorList>
    </citation>
    <scope>INTERACTION WITH DHX9</scope>
</reference>
<reference key="17">
    <citation type="journal article" date="2004" name="J. Biol. Chem.">
        <title>Interaction between glucose-regulated destruction domain of DNA topoisomerase IIalpha and MPN domain of Jab1/CSN5.</title>
        <authorList>
            <person name="Yun J."/>
            <person name="Tomida A."/>
            <person name="Andoh T."/>
            <person name="Tsuruo T."/>
        </authorList>
    </citation>
    <scope>INTERACTION WITH COPS5</scope>
</reference>
<reference key="18">
    <citation type="journal article" date="2006" name="Cell">
        <title>Global, in vivo, and site-specific phosphorylation dynamics in signaling networks.</title>
        <authorList>
            <person name="Olsen J.V."/>
            <person name="Blagoev B."/>
            <person name="Gnad F."/>
            <person name="Macek B."/>
            <person name="Kumar C."/>
            <person name="Mortensen P."/>
            <person name="Mann M."/>
        </authorList>
    </citation>
    <scope>PHOSPHORYLATION [LARGE SCALE ANALYSIS] AT SER-4; SER-1106; SER-1213; SER-1247; SER-1332; SER-1337; THR-1343; SER-1351; SER-1354; SER-1374; SER-1377 AND SER-1525</scope>
    <scope>IDENTIFICATION BY MASS SPECTROMETRY [LARGE SCALE ANALYSIS]</scope>
    <source>
        <tissue>Cervix carcinoma</tissue>
    </source>
</reference>
<reference key="19">
    <citation type="journal article" date="2006" name="Nat. Biotechnol.">
        <title>A probability-based approach for high-throughput protein phosphorylation analysis and site localization.</title>
        <authorList>
            <person name="Beausoleil S.A."/>
            <person name="Villen J."/>
            <person name="Gerber S.A."/>
            <person name="Rush J."/>
            <person name="Gygi S.P."/>
        </authorList>
    </citation>
    <scope>PHOSPHORYLATION [LARGE SCALE ANALYSIS] AT SER-1213; SER-1374; SER-1377 AND SER-1525</scope>
    <scope>IDENTIFICATION BY MASS SPECTROMETRY [LARGE SCALE ANALYSIS]</scope>
    <source>
        <tissue>Cervix carcinoma</tissue>
    </source>
</reference>
<reference key="20">
    <citation type="journal article" date="2007" name="J. Proteome Res.">
        <title>Improved titanium dioxide enrichment of phosphopeptides from HeLa cells and high confident phosphopeptide identification by cross-validation of MS/MS and MS/MS/MS spectra.</title>
        <authorList>
            <person name="Yu L.R."/>
            <person name="Zhu Z."/>
            <person name="Chan K.C."/>
            <person name="Issaq H.J."/>
            <person name="Dimitrov D.S."/>
            <person name="Veenstra T.D."/>
        </authorList>
    </citation>
    <scope>PHOSPHORYLATION [LARGE SCALE ANALYSIS] AT SER-1247</scope>
    <scope>IDENTIFICATION BY MASS SPECTROMETRY [LARGE SCALE ANALYSIS]</scope>
    <source>
        <tissue>Cervix carcinoma</tissue>
    </source>
</reference>
<reference key="21">
    <citation type="journal article" date="2007" name="Nucleic Acids Res.">
        <title>Nuclear interactions of topoisomerase II alpha and beta with phospholipid scramblase 1.</title>
        <authorList>
            <person name="Wyles J.P."/>
            <person name="Wu Z."/>
            <person name="Mirski S.E."/>
            <person name="Cole S.P."/>
        </authorList>
    </citation>
    <scope>FUNCTION</scope>
    <scope>SUBCELLULAR LOCATION</scope>
    <scope>INTERACTION WITH PLSCR1</scope>
</reference>
<reference key="22">
    <citation type="journal article" date="2008" name="Biochem. J.">
        <title>Plk3 phosphorylates topoisomerase IIalpha at Thr(1342), a site that is not recognized by Plk1.</title>
        <authorList>
            <person name="Iida M."/>
            <person name="Matsuda M."/>
            <person name="Komatani H."/>
        </authorList>
    </citation>
    <scope>PHOSPHORYLATION AT THR-1343</scope>
</reference>
<reference key="23">
    <citation type="journal article" date="2008" name="J. Proteome Res.">
        <title>Combining protein-based IMAC, peptide-based IMAC, and MudPIT for efficient phosphoproteomic analysis.</title>
        <authorList>
            <person name="Cantin G.T."/>
            <person name="Yi W."/>
            <person name="Lu B."/>
            <person name="Park S.K."/>
            <person name="Xu T."/>
            <person name="Lee J.-D."/>
            <person name="Yates J.R. III"/>
        </authorList>
    </citation>
    <scope>PHOSPHORYLATION [LARGE SCALE ANALYSIS] AT SER-1504</scope>
    <scope>IDENTIFICATION BY MASS SPECTROMETRY [LARGE SCALE ANALYSIS]</scope>
    <source>
        <tissue>Cervix carcinoma</tissue>
    </source>
</reference>
<reference key="24">
    <citation type="journal article" date="2008" name="Mol. Cell">
        <title>Kinase-selective enrichment enables quantitative phosphoproteomics of the kinome across the cell cycle.</title>
        <authorList>
            <person name="Daub H."/>
            <person name="Olsen J.V."/>
            <person name="Bairlein M."/>
            <person name="Gnad F."/>
            <person name="Oppermann F.S."/>
            <person name="Korner R."/>
            <person name="Greff Z."/>
            <person name="Keri G."/>
            <person name="Stemmann O."/>
            <person name="Mann M."/>
        </authorList>
    </citation>
    <scope>PHOSPHORYLATION [LARGE SCALE ANALYSIS] AT SER-4; SER-1213; SER-1247; SER-1332; SER-1337 AND SER-1377</scope>
    <scope>IDENTIFICATION BY MASS SPECTROMETRY [LARGE SCALE ANALYSIS]</scope>
    <source>
        <tissue>Cervix carcinoma</tissue>
    </source>
</reference>
<reference key="25">
    <citation type="journal article" date="2008" name="Nucleic Acids Res.">
        <title>The SET and transposase domain protein Metnase enhances chromosome decatenation: regulation by automethylation.</title>
        <authorList>
            <person name="Williamson E.A."/>
            <person name="Rasila K.K."/>
            <person name="Corwin L.K."/>
            <person name="Wray J."/>
            <person name="Beck B.D."/>
            <person name="Severns V."/>
            <person name="Mobarak C."/>
            <person name="Lee S.H."/>
            <person name="Nickoloff J.A."/>
            <person name="Hromas R."/>
        </authorList>
    </citation>
    <scope>FUNCTION</scope>
    <scope>INTERACTION WITH SETMAR</scope>
</reference>
<reference key="26">
    <citation type="journal article" date="2008" name="Proc. Natl. Acad. Sci. U.S.A.">
        <title>A quantitative atlas of mitotic phosphorylation.</title>
        <authorList>
            <person name="Dephoure N."/>
            <person name="Zhou C."/>
            <person name="Villen J."/>
            <person name="Beausoleil S.A."/>
            <person name="Bakalarski C.E."/>
            <person name="Elledge S.J."/>
            <person name="Gygi S.P."/>
        </authorList>
    </citation>
    <scope>PHOSPHORYLATION [LARGE SCALE ANALYSIS] AT SER-1106; SER-1213; SER-1332; SER-1337; THR-1343; SER-1351; SER-1392; SER-1393; SER-1449; SER-1469; THR-1470; SER-1471; SER-1474 AND SER-1525</scope>
    <scope>IDENTIFICATION BY MASS SPECTROMETRY [LARGE SCALE ANALYSIS]</scope>
    <source>
        <tissue>Cervix carcinoma</tissue>
    </source>
</reference>
<reference key="27">
    <citation type="journal article" date="2009" name="Anal. Chem.">
        <title>Lys-N and trypsin cover complementary parts of the phosphoproteome in a refined SCX-based approach.</title>
        <authorList>
            <person name="Gauci S."/>
            <person name="Helbig A.O."/>
            <person name="Slijper M."/>
            <person name="Krijgsveld J."/>
            <person name="Heck A.J."/>
            <person name="Mohammed S."/>
        </authorList>
    </citation>
    <scope>IDENTIFICATION BY MASS SPECTROMETRY [LARGE SCALE ANALYSIS]</scope>
</reference>
<reference key="28">
    <citation type="journal article" date="2009" name="Biochemistry">
        <title>Use of divalent metal ions in the DNA cleavage reaction of human type II topoisomerases.</title>
        <authorList>
            <person name="Deweese J.E."/>
            <person name="Burch A.M."/>
            <person name="Burgin A.B."/>
            <person name="Osheroff N."/>
        </authorList>
    </citation>
    <scope>CATALYTIC ACTIVITY</scope>
    <scope>COFACTOR</scope>
</reference>
<reference key="29">
    <citation type="journal article" date="2009" name="Biochemistry">
        <title>Metal ion interactions in the DNA cleavage/ligation active site of human topoisomerase IIalpha.</title>
        <authorList>
            <person name="Deweese J.E."/>
            <person name="Guengerich F.P."/>
            <person name="Burgin A.B."/>
            <person name="Osheroff N."/>
        </authorList>
    </citation>
    <scope>MUTAGENESIS OF GLU-461; ASP-541; ASP-543 AND ASP-545</scope>
    <scope>PUTATIVE METAL-BINDING SITES</scope>
    <scope>CATALYTIC ACTIVITY</scope>
    <scope>COFACTOR</scope>
</reference>
<reference key="30">
    <citation type="journal article" date="2009" name="Nucleic Acids Res.">
        <title>Casein kinase I delta/epsilon phosphorylates topoisomerase IIalpha at serine-1106 and modulates DNA cleavage activity.</title>
        <authorList>
            <person name="Grozav A.G."/>
            <person name="Chikamori K."/>
            <person name="Kozuki T."/>
            <person name="Grabowski D.R."/>
            <person name="Bukowski R.M."/>
            <person name="Willard B."/>
            <person name="Kinter M."/>
            <person name="Andersen A.H."/>
            <person name="Ganapathi R."/>
            <person name="Ganapathi M.K."/>
        </authorList>
    </citation>
    <scope>PHOSPHORYLATION AT SER-1106 BY CSNK1D/CK1</scope>
</reference>
<reference key="31">
    <citation type="journal article" date="2009" name="Sci. Signal.">
        <title>Quantitative phosphoproteomic analysis of T cell receptor signaling reveals system-wide modulation of protein-protein interactions.</title>
        <authorList>
            <person name="Mayya V."/>
            <person name="Lundgren D.H."/>
            <person name="Hwang S.-I."/>
            <person name="Rezaul K."/>
            <person name="Wu L."/>
            <person name="Eng J.K."/>
            <person name="Rodionov V."/>
            <person name="Han D.K."/>
        </authorList>
    </citation>
    <scope>PHOSPHORYLATION [LARGE SCALE ANALYSIS] AT SER-1247; SER-1374; SER-1387; SER-1393; SER-1504 AND SER-1525</scope>
    <scope>IDENTIFICATION BY MASS SPECTROMETRY [LARGE SCALE ANALYSIS]</scope>
    <source>
        <tissue>Leukemic T-cell</tissue>
    </source>
</reference>
<reference key="32">
    <citation type="journal article" date="2010" name="Nucleic Acids Res.">
        <title>Metnase promotes restart and repair of stalled and collapsed replication forks.</title>
        <authorList>
            <person name="De Haro L.P."/>
            <person name="Wray J."/>
            <person name="Williamson E.A."/>
            <person name="Durant S.T."/>
            <person name="Corwin L."/>
            <person name="Gentry A.C."/>
            <person name="Osheroff N."/>
            <person name="Lee S.H."/>
            <person name="Hromas R."/>
            <person name="Nickoloff J.A."/>
        </authorList>
    </citation>
    <scope>INTERACTION WITH SETMAR</scope>
</reference>
<reference key="33">
    <citation type="journal article" date="2010" name="Sci. Signal.">
        <title>Quantitative phosphoproteomics reveals widespread full phosphorylation site occupancy during mitosis.</title>
        <authorList>
            <person name="Olsen J.V."/>
            <person name="Vermeulen M."/>
            <person name="Santamaria A."/>
            <person name="Kumar C."/>
            <person name="Miller M.L."/>
            <person name="Jensen L.J."/>
            <person name="Gnad F."/>
            <person name="Cox J."/>
            <person name="Jensen T.S."/>
            <person name="Nigg E.A."/>
            <person name="Brunak S."/>
            <person name="Mann M."/>
        </authorList>
    </citation>
    <scope>ACETYLATION [LARGE SCALE ANALYSIS] AT MET-1</scope>
    <scope>PHOSPHORYLATION [LARGE SCALE ANALYSIS] AT SER-4; THR-282; SER-1106; THR-1205; SER-1213; SER-1247; SER-1332; SER-1337; THR-1343; SER-1351; SER-1354; SER-1374; SER-1377; SER-1471; SER-1474; SER-1495; SER-1504 AND SER-1525</scope>
    <scope>IDENTIFICATION BY MASS SPECTROMETRY [LARGE SCALE ANALYSIS]</scope>
    <source>
        <tissue>Cervix carcinoma</tissue>
    </source>
</reference>
<reference key="34">
    <citation type="journal article" date="2011" name="BMC Syst. Biol.">
        <title>Initial characterization of the human central proteome.</title>
        <authorList>
            <person name="Burkard T.R."/>
            <person name="Planyavsky M."/>
            <person name="Kaupe I."/>
            <person name="Breitwieser F.P."/>
            <person name="Buerckstuemmer T."/>
            <person name="Bennett K.L."/>
            <person name="Superti-Furga G."/>
            <person name="Colinge J."/>
        </authorList>
    </citation>
    <scope>IDENTIFICATION BY MASS SPECTROMETRY [LARGE SCALE ANALYSIS]</scope>
</reference>
<reference key="35">
    <citation type="journal article" date="2011" name="Sci. Signal.">
        <title>System-wide temporal characterization of the proteome and phosphoproteome of human embryonic stem cell differentiation.</title>
        <authorList>
            <person name="Rigbolt K.T."/>
            <person name="Prokhorova T.A."/>
            <person name="Akimov V."/>
            <person name="Henningsen J."/>
            <person name="Johansen P.T."/>
            <person name="Kratchmarova I."/>
            <person name="Kassem M."/>
            <person name="Mann M."/>
            <person name="Olsen J.V."/>
            <person name="Blagoev B."/>
        </authorList>
    </citation>
    <scope>ACETYLATION [LARGE SCALE ANALYSIS] AT MET-1</scope>
    <scope>PHOSPHORYLATION [LARGE SCALE ANALYSIS] AT SER-4; SER-1106; SER-1213; SER-1247; SER-1295; SER-1297; SER-1299; SER-1302; SER-1332; SER-1337; THR-1343; SER-1351; SER-1354; SER-1374; SER-1377; SER-1469; THR-1470; SER-1471; SER-1474; SER-1476 AND SER-1525</scope>
    <scope>IDENTIFICATION BY MASS SPECTROMETRY [LARGE SCALE ANALYSIS]</scope>
</reference>
<reference key="36">
    <citation type="journal article" date="2012" name="Biol. Open">
        <title>Taperin (c9orf75), a mutated gene in nonsyndromic deafness, encodes a vertebrate specific, nuclear localized protein phosphatase one alpha (PP1alpha) docking protein.</title>
        <authorList>
            <person name="Ferrar T."/>
            <person name="Chamousset D."/>
            <person name="De Wever V."/>
            <person name="Nimick M."/>
            <person name="Andersen J."/>
            <person name="Trinkle-Mulcahy L."/>
            <person name="Moorhead G.B."/>
        </authorList>
    </citation>
    <scope>INTERACTION WITH TPRN</scope>
</reference>
<reference key="37">
    <citation type="journal article" date="2012" name="Nat. Struct. Mol. Biol.">
        <title>Structure of a topoisomerase II-DNA-nucleotide complex reveals a new control mechanism for ATPase activity.</title>
        <authorList>
            <person name="Schmidt B.H."/>
            <person name="Osheroff N."/>
            <person name="Berger J.M."/>
        </authorList>
    </citation>
    <scope>MUTAGENESIS OF 342-LYS--LYS-344</scope>
</reference>
<reference key="38">
    <citation type="journal article" date="2012" name="Nucleic Acids Res.">
        <title>RECQL5 cooperates with Topoisomerase II alpha in DNA decatenation and cell cycle progression.</title>
        <authorList>
            <person name="Ramamoorthy M."/>
            <person name="Tadokoro T."/>
            <person name="Rybanska I."/>
            <person name="Ghosh A.K."/>
            <person name="Wersto R."/>
            <person name="May A."/>
            <person name="Kulikowicz T."/>
            <person name="Sykora P."/>
            <person name="Croteau D.L."/>
            <person name="Bohr V.A."/>
        </authorList>
    </citation>
    <scope>FUNCTION</scope>
    <scope>SUBCELLULAR LOCATION</scope>
    <scope>INTERACTION WITH RECQL5</scope>
</reference>
<reference key="39">
    <citation type="journal article" date="2012" name="Proc. Natl. Acad. Sci. U.S.A.">
        <title>N-terminal acetylome analyses and functional insights of the N-terminal acetyltransferase NatB.</title>
        <authorList>
            <person name="Van Damme P."/>
            <person name="Lasa M."/>
            <person name="Polevoda B."/>
            <person name="Gazquez C."/>
            <person name="Elosegui-Artola A."/>
            <person name="Kim D.S."/>
            <person name="De Juan-Pardo E."/>
            <person name="Demeyer K."/>
            <person name="Hole K."/>
            <person name="Larrea E."/>
            <person name="Timmerman E."/>
            <person name="Prieto J."/>
            <person name="Arnesen T."/>
            <person name="Sherman F."/>
            <person name="Gevaert K."/>
            <person name="Aldabe R."/>
        </authorList>
    </citation>
    <scope>ACETYLATION [LARGE SCALE ANALYSIS] AT MET-1</scope>
    <scope>IDENTIFICATION BY MASS SPECTROMETRY [LARGE SCALE ANALYSIS]</scope>
</reference>
<reference key="40">
    <citation type="journal article" date="2012" name="Proc. Natl. Acad. Sci. U.S.A.">
        <title>DNA cleavage and opening reactions of human topoisomerase IIalpha are regulated via Mg2+-mediated dynamic bending of gate-DNA.</title>
        <authorList>
            <person name="Lee S."/>
            <person name="Jung S.R."/>
            <person name="Heo K."/>
            <person name="Byl J.A."/>
            <person name="Deweese J.E."/>
            <person name="Osheroff N."/>
            <person name="Hohng S."/>
        </authorList>
    </citation>
    <scope>FUNCTION</scope>
    <scope>MUTAGENESIS OF GLU-461; ASP-541 AND ASP-543</scope>
    <scope>COFACTOR</scope>
</reference>
<reference key="41">
    <citation type="journal article" date="2013" name="J. Proteome Res.">
        <title>Toward a comprehensive characterization of a human cancer cell phosphoproteome.</title>
        <authorList>
            <person name="Zhou H."/>
            <person name="Di Palma S."/>
            <person name="Preisinger C."/>
            <person name="Peng M."/>
            <person name="Polat A.N."/>
            <person name="Heck A.J."/>
            <person name="Mohammed S."/>
        </authorList>
    </citation>
    <scope>PHOSPHORYLATION [LARGE SCALE ANALYSIS] AT SER-4; SER-1106; SER-1213; THR-1244; SER-1247; SER-1374; SER-1377; SER-1391; SER-1449; SER-1469; SER-1471; SER-1474; SER-1495 AND SER-1504</scope>
    <scope>IDENTIFICATION BY MASS SPECTROMETRY [LARGE SCALE ANALYSIS]</scope>
    <source>
        <tissue>Cervix carcinoma</tissue>
        <tissue>Erythroleukemia</tissue>
    </source>
</reference>
<reference key="42">
    <citation type="journal article" date="2013" name="Nat. Commun.">
        <title>GANP regulates recruitment of AID to immunoglobulin variable regions by modulating transcription and nucleosome occupancy.</title>
        <authorList>
            <person name="Singh S.K."/>
            <person name="Maeda K."/>
            <person name="Eid M.M."/>
            <person name="Almofty S.A."/>
            <person name="Ono M."/>
            <person name="Pham P."/>
            <person name="Goodman M.F."/>
            <person name="Sakaguchi N."/>
        </authorList>
    </citation>
    <scope>INTERACTION WITH MCM3AP</scope>
</reference>
<reference key="43">
    <citation type="journal article" date="2014" name="Nat. Struct. Mol. Biol.">
        <title>Uncovering global SUMOylation signaling networks in a site-specific manner.</title>
        <authorList>
            <person name="Hendriks I.A."/>
            <person name="D'Souza R.C."/>
            <person name="Yang B."/>
            <person name="Verlaan-de Vries M."/>
            <person name="Mann M."/>
            <person name="Vertegaal A.C."/>
        </authorList>
    </citation>
    <scope>SUMOYLATION [LARGE SCALE ANALYSIS] AT LYS-1228; LYS-1240; LYS-1385 AND LYS-1492</scope>
    <scope>IDENTIFICATION BY MASS SPECTROMETRY [LARGE SCALE ANALYSIS]</scope>
</reference>
<reference key="44">
    <citation type="journal article" date="2014" name="Proc. Natl. Acad. Sci. U.S.A.">
        <title>Mapping of SUMO sites and analysis of SUMOylation changes induced by external stimuli.</title>
        <authorList>
            <person name="Impens F."/>
            <person name="Radoshevich L."/>
            <person name="Cossart P."/>
            <person name="Ribet D."/>
        </authorList>
    </citation>
    <scope>SUMOYLATION [LARGE SCALE ANALYSIS] AT LYS-1240</scope>
    <scope>IDENTIFICATION BY MASS SPECTROMETRY [LARGE SCALE ANALYSIS]</scope>
</reference>
<reference key="45">
    <citation type="journal article" date="2015" name="Cell Rep.">
        <title>SUMO-2 orchestrates chromatin modifiers in response to DNA damage.</title>
        <authorList>
            <person name="Hendriks I.A."/>
            <person name="Treffers L.W."/>
            <person name="Verlaan-de Vries M."/>
            <person name="Olsen J.V."/>
            <person name="Vertegaal A.C."/>
        </authorList>
    </citation>
    <scope>SUMOYLATION [LARGE SCALE ANALYSIS] AT LYS-639; LYS-662; LYS-676; LYS-1075; LYS-1196; LYS-1228; LYS-1240; LYS-1385 AND LYS-1442</scope>
    <scope>IDENTIFICATION BY MASS SPECTROMETRY [LARGE SCALE ANALYSIS]</scope>
</reference>
<reference key="46">
    <citation type="journal article" date="2015" name="Mol. Cell. Proteomics">
        <title>System-wide analysis of SUMOylation dynamics in response to replication stress reveals novel small ubiquitin-like modified target proteins and acceptor lysines relevant for genome stability.</title>
        <authorList>
            <person name="Xiao Z."/>
            <person name="Chang J.G."/>
            <person name="Hendriks I.A."/>
            <person name="Sigurdsson J.O."/>
            <person name="Olsen J.V."/>
            <person name="Vertegaal A.C."/>
        </authorList>
    </citation>
    <scope>SUMOYLATION [LARGE SCALE ANALYSIS] AT LYS-1228 AND LYS-1240</scope>
    <scope>IDENTIFICATION BY MASS SPECTROMETRY [LARGE SCALE ANALYSIS]</scope>
</reference>
<reference key="47">
    <citation type="journal article" date="2015" name="PLoS ONE">
        <title>Identification of Novel Proteins Co-Purifying with Cockayne Syndrome Group B (CSB) Reveals Potential Roles for CSB in RNA Metabolism and Chromatin Dynamics.</title>
        <authorList>
            <person name="Nicolai S."/>
            <person name="Filippi S."/>
            <person name="Caputo M."/>
            <person name="Cipak L."/>
            <person name="Gregan J."/>
            <person name="Ammerer G."/>
            <person name="Frontini M."/>
            <person name="Willems D."/>
            <person name="Prantera G."/>
            <person name="Balajee A.S."/>
            <person name="Proietti-De-Santis L."/>
        </authorList>
    </citation>
    <scope>INTERACTION WITH ERCC6</scope>
</reference>
<reference key="48">
    <citation type="journal article" date="2017" name="Nat. Struct. Mol. Biol.">
        <title>Site-specific mapping of the human SUMO proteome reveals co-modification with phosphorylation.</title>
        <authorList>
            <person name="Hendriks I.A."/>
            <person name="Lyon D."/>
            <person name="Young C."/>
            <person name="Jensen L.J."/>
            <person name="Vertegaal A.C."/>
            <person name="Nielsen M.L."/>
        </authorList>
    </citation>
    <scope>SUMOYLATION [LARGE SCALE ANALYSIS] AT LYS-17; LYS-156; LYS-157; LYS-261; LYS-352; LYS-386; LYS-397; LYS-416; LYS-418; LYS-425; LYS-440; LYS-466; LYS-480; LYS-529; LYS-584; LYS-599; LYS-614; LYS-622; LYS-625; LYS-632; LYS-639; LYS-655; LYS-662; LYS-676; LYS-1075; LYS-1114; LYS-1196; LYS-1204; LYS-1228; LYS-1240; LYS-1259; LYS-1276; LYS-1283; LYS-1286; LYS-1363; LYS-1367; LYS-1373; LYS-1385; LYS-1422; LYS-1442; LYS-1454; LYS-1459; LYS-1484 AND LYS-1492</scope>
    <scope>IDENTIFICATION BY MASS SPECTROMETRY [LARGE SCALE ANALYSIS]</scope>
</reference>
<reference key="49">
    <citation type="journal article" date="2021" name="PLoS Pathog.">
        <title>The Epstein-Barr virus deubiquitinating enzyme BPLF1 regulates the activity of topoisomerase II during productive infection.</title>
        <authorList>
            <person name="Li J."/>
            <person name="Nagy N."/>
            <person name="Liu J."/>
            <person name="Gupta S."/>
            <person name="Frisan T."/>
            <person name="Hennig T."/>
            <person name="Cameron D.P."/>
            <person name="Baranello L."/>
            <person name="Masucci M.G."/>
        </authorList>
    </citation>
    <scope>DEUBIQUITINATION BY EPSTEIN-BARR VIRUS PROTEIN BPLF1 (MICROBIAL INFECTION)</scope>
    <scope>SUMOYLATION</scope>
</reference>
<reference key="50">
    <citation type="journal article" date="2022" name="Life. Sci Alliance">
        <title>The human RNA polymerase I structure reveals an HMG-like docking domain specific to metazoans.</title>
        <authorList>
            <person name="Daiss J.L."/>
            <person name="Pilsl M."/>
            <person name="Straub K."/>
            <person name="Bleckmann A."/>
            <person name="Hocherl M."/>
            <person name="Heiss F.B."/>
            <person name="Abascal-Palacios G."/>
            <person name="Ramsay E.P."/>
            <person name="Tluckova K."/>
            <person name="Mars J.C."/>
            <person name="Furtges T."/>
            <person name="Bruckmann A."/>
            <person name="Rudack T."/>
            <person name="Bernecky C."/>
            <person name="Lamour V."/>
            <person name="Panov K."/>
            <person name="Vannini A."/>
            <person name="Moss T."/>
            <person name="Engel C."/>
        </authorList>
    </citation>
    <scope>SUBUNIT</scope>
    <scope>INTERACTION WITH POLR1A AND UBTF</scope>
</reference>
<reference key="51">
    <citation type="journal article" date="2005" name="J. Biol. Chem.">
        <title>Nucleotide-dependent domain movement in the ATPase domain of a human type IIA DNA topoisomerase.</title>
        <authorList>
            <person name="Wei H."/>
            <person name="Ruthenburg A.J."/>
            <person name="Bechis S.K."/>
            <person name="Verdine G.L."/>
        </authorList>
    </citation>
    <scope>X-RAY CRYSTALLOGRAPHY (2.51 ANGSTROMS) OF 29-428 IN COMPLEX WITH ADP</scope>
    <scope>X-RAY CRYSTALLOGRAPHY (1.87 ANGSTROMS) OF 29-428 IN COMPLEX WITH AMPPNP</scope>
</reference>
<reference key="52">
    <citation type="journal article" date="2012" name="J. Mol. Biol.">
        <title>The structure of DNA-bound human topoisomerase II alpha: conformational mechanisms for coordinating inter-subunit interactions with DNA cleavage.</title>
        <authorList>
            <person name="Wendorff T.J."/>
            <person name="Schmidt B.H."/>
            <person name="Heslop P."/>
            <person name="Austin C.A."/>
            <person name="Berger J.M."/>
        </authorList>
    </citation>
    <scope>X-RAY CRYSTALLOGRAPHY (2.9 ANGSTROMS) OF 431-1193 IN COMPLEX WITH DNA AND MAGNESIUM ION</scope>
    <scope>SUBUNIT</scope>
    <scope>COFACTOR</scope>
</reference>
<reference key="53">
    <citation type="journal article" date="2014" name="PLoS ONE">
        <title>Structure of the N-terminal Gyrase B fragment in complex with ADPPi reveals rigid-body motion induced by ATP hydrolysis.</title>
        <authorList>
            <person name="Stanger F.V."/>
            <person name="Dehio C."/>
            <person name="Schirmer T."/>
        </authorList>
    </citation>
    <scope>X-RAY CRYSTALLOGRAPHY (1.80 ANGSTROMS) OF 29-428 IN COMPLEX WITH ADP AND ATP ANALOGS</scope>
    <scope>DOMAIN</scope>
</reference>
<reference key="54">
    <citation type="journal article" date="1991" name="Cancer Res.">
        <title>Identification of a point mutation in the topoisomerase II gene from a human leukemia cell line containing an amsacrine-resistant form of topoisomerase II.</title>
        <authorList>
            <person name="Hinds M."/>
            <person name="Deisseroth K."/>
            <person name="Mayes J."/>
            <person name="Altschuler E."/>
            <person name="Jansen R."/>
            <person name="Ledley F.D."/>
            <person name="Zwelling L.A."/>
        </authorList>
    </citation>
    <scope>VARIANT AMSACRINE-RESISTANT LYS-487</scope>
</reference>
<reference key="55">
    <citation type="journal article" date="1991" name="Proc. Natl. Acad. Sci. U.S.A.">
        <title>Expression of a mutant DNA topoisomerase II in CCRF-CEM human leukemic cells selected for resistance to teniposide.</title>
        <authorList>
            <person name="Bugg B.Y."/>
            <person name="Danks M.K."/>
            <person name="Beck W.T."/>
            <person name="Suttle D.P."/>
        </authorList>
    </citation>
    <scope>VARIANT TENIPOSIDE-RESISTANT GLN-450</scope>
</reference>
<dbReference type="EC" id="5.6.2.2" evidence="5 18 19"/>
<dbReference type="EMBL" id="J04088">
    <property type="protein sequence ID" value="AAA61209.1"/>
    <property type="molecule type" value="mRNA"/>
</dbReference>
<dbReference type="EMBL" id="AF071747">
    <property type="protein sequence ID" value="AAC77388.1"/>
    <property type="molecule type" value="Genomic_DNA"/>
</dbReference>
<dbReference type="EMBL" id="AF071738">
    <property type="protein sequence ID" value="AAC77388.1"/>
    <property type="status" value="JOINED"/>
    <property type="molecule type" value="Genomic_DNA"/>
</dbReference>
<dbReference type="EMBL" id="AF071739">
    <property type="protein sequence ID" value="AAC77388.1"/>
    <property type="status" value="JOINED"/>
    <property type="molecule type" value="Genomic_DNA"/>
</dbReference>
<dbReference type="EMBL" id="AF071740">
    <property type="protein sequence ID" value="AAC77388.1"/>
    <property type="status" value="JOINED"/>
    <property type="molecule type" value="Genomic_DNA"/>
</dbReference>
<dbReference type="EMBL" id="AF071741">
    <property type="protein sequence ID" value="AAC77388.1"/>
    <property type="status" value="JOINED"/>
    <property type="molecule type" value="Genomic_DNA"/>
</dbReference>
<dbReference type="EMBL" id="AF071742">
    <property type="protein sequence ID" value="AAC77388.1"/>
    <property type="status" value="JOINED"/>
    <property type="molecule type" value="Genomic_DNA"/>
</dbReference>
<dbReference type="EMBL" id="AF071743">
    <property type="protein sequence ID" value="AAC77388.1"/>
    <property type="status" value="JOINED"/>
    <property type="molecule type" value="Genomic_DNA"/>
</dbReference>
<dbReference type="EMBL" id="AF071744">
    <property type="protein sequence ID" value="AAC77388.1"/>
    <property type="status" value="JOINED"/>
    <property type="molecule type" value="Genomic_DNA"/>
</dbReference>
<dbReference type="EMBL" id="AF071745">
    <property type="protein sequence ID" value="AAC77388.1"/>
    <property type="status" value="JOINED"/>
    <property type="molecule type" value="Genomic_DNA"/>
</dbReference>
<dbReference type="EMBL" id="AF071746">
    <property type="protein sequence ID" value="AAC77388.1"/>
    <property type="status" value="JOINED"/>
    <property type="molecule type" value="Genomic_DNA"/>
</dbReference>
<dbReference type="EMBL" id="AJ011741">
    <property type="protein sequence ID" value="CAA09762.1"/>
    <property type="molecule type" value="Genomic_DNA"/>
</dbReference>
<dbReference type="EMBL" id="AJ011742">
    <property type="protein sequence ID" value="CAA09762.1"/>
    <property type="status" value="JOINED"/>
    <property type="molecule type" value="Genomic_DNA"/>
</dbReference>
<dbReference type="EMBL" id="AJ011743">
    <property type="protein sequence ID" value="CAA09762.1"/>
    <property type="status" value="JOINED"/>
    <property type="molecule type" value="Genomic_DNA"/>
</dbReference>
<dbReference type="EMBL" id="AJ011744">
    <property type="protein sequence ID" value="CAA09762.1"/>
    <property type="status" value="JOINED"/>
    <property type="molecule type" value="Genomic_DNA"/>
</dbReference>
<dbReference type="EMBL" id="AJ011745">
    <property type="protein sequence ID" value="CAA09762.1"/>
    <property type="status" value="JOINED"/>
    <property type="molecule type" value="Genomic_DNA"/>
</dbReference>
<dbReference type="EMBL" id="AJ011746">
    <property type="protein sequence ID" value="CAA09762.1"/>
    <property type="status" value="JOINED"/>
    <property type="molecule type" value="Genomic_DNA"/>
</dbReference>
<dbReference type="EMBL" id="AJ011747">
    <property type="protein sequence ID" value="CAA09762.1"/>
    <property type="status" value="JOINED"/>
    <property type="molecule type" value="Genomic_DNA"/>
</dbReference>
<dbReference type="EMBL" id="AJ011748">
    <property type="protein sequence ID" value="CAA09762.1"/>
    <property type="status" value="JOINED"/>
    <property type="molecule type" value="Genomic_DNA"/>
</dbReference>
<dbReference type="EMBL" id="AJ011749">
    <property type="protein sequence ID" value="CAA09762.1"/>
    <property type="status" value="JOINED"/>
    <property type="molecule type" value="Genomic_DNA"/>
</dbReference>
<dbReference type="EMBL" id="AJ011750">
    <property type="protein sequence ID" value="CAA09762.1"/>
    <property type="status" value="JOINED"/>
    <property type="molecule type" value="Genomic_DNA"/>
</dbReference>
<dbReference type="EMBL" id="AJ011751">
    <property type="protein sequence ID" value="CAA09762.1"/>
    <property type="status" value="JOINED"/>
    <property type="molecule type" value="Genomic_DNA"/>
</dbReference>
<dbReference type="EMBL" id="AJ011752">
    <property type="protein sequence ID" value="CAA09762.1"/>
    <property type="status" value="JOINED"/>
    <property type="molecule type" value="Genomic_DNA"/>
</dbReference>
<dbReference type="EMBL" id="AJ011753">
    <property type="protein sequence ID" value="CAA09762.1"/>
    <property type="status" value="JOINED"/>
    <property type="molecule type" value="Genomic_DNA"/>
</dbReference>
<dbReference type="EMBL" id="AJ011754">
    <property type="protein sequence ID" value="CAA09762.1"/>
    <property type="status" value="JOINED"/>
    <property type="molecule type" value="Genomic_DNA"/>
</dbReference>
<dbReference type="EMBL" id="AJ011755">
    <property type="protein sequence ID" value="CAA09762.1"/>
    <property type="status" value="JOINED"/>
    <property type="molecule type" value="Genomic_DNA"/>
</dbReference>
<dbReference type="EMBL" id="AJ011756">
    <property type="protein sequence ID" value="CAA09762.1"/>
    <property type="status" value="JOINED"/>
    <property type="molecule type" value="Genomic_DNA"/>
</dbReference>
<dbReference type="EMBL" id="AJ011757">
    <property type="protein sequence ID" value="CAA09762.1"/>
    <property type="status" value="JOINED"/>
    <property type="molecule type" value="Genomic_DNA"/>
</dbReference>
<dbReference type="EMBL" id="AJ011758">
    <property type="protein sequence ID" value="CAA09762.1"/>
    <property type="status" value="JOINED"/>
    <property type="molecule type" value="Genomic_DNA"/>
</dbReference>
<dbReference type="EMBL" id="AC080112">
    <property type="status" value="NOT_ANNOTATED_CDS"/>
    <property type="molecule type" value="Genomic_DNA"/>
</dbReference>
<dbReference type="EMBL" id="AF285157">
    <property type="protein sequence ID" value="AAG13403.1"/>
    <property type="molecule type" value="mRNA"/>
</dbReference>
<dbReference type="EMBL" id="AF285158">
    <property type="protein sequence ID" value="AAG13404.1"/>
    <property type="molecule type" value="mRNA"/>
</dbReference>
<dbReference type="EMBL" id="CH471152">
    <property type="protein sequence ID" value="EAW60663.1"/>
    <property type="molecule type" value="Genomic_DNA"/>
</dbReference>
<dbReference type="EMBL" id="BC140791">
    <property type="protein sequence ID" value="AAI40792.1"/>
    <property type="molecule type" value="mRNA"/>
</dbReference>
<dbReference type="EMBL" id="AF285159">
    <property type="protein sequence ID" value="AAG13405.1"/>
    <property type="molecule type" value="mRNA"/>
</dbReference>
<dbReference type="EMBL" id="AF069522">
    <property type="protein sequence ID" value="AAC23518.1"/>
    <property type="molecule type" value="Genomic_DNA"/>
</dbReference>
<dbReference type="EMBL" id="AF064590">
    <property type="protein sequence ID" value="AAC16736.1"/>
    <property type="molecule type" value="Genomic_DNA"/>
</dbReference>
<dbReference type="CCDS" id="CCDS45672.1">
    <molecule id="P11388-1"/>
</dbReference>
<dbReference type="PIR" id="A40493">
    <property type="entry name" value="A40493"/>
</dbReference>
<dbReference type="RefSeq" id="NP_001058.2">
    <molecule id="P11388-1"/>
    <property type="nucleotide sequence ID" value="NM_001067.3"/>
</dbReference>
<dbReference type="PDB" id="1ZXM">
    <property type="method" value="X-ray"/>
    <property type="resolution" value="1.87 A"/>
    <property type="chains" value="A/B=29-428"/>
</dbReference>
<dbReference type="PDB" id="1ZXN">
    <property type="method" value="X-ray"/>
    <property type="resolution" value="2.51 A"/>
    <property type="chains" value="A/B/C/D=29-428"/>
</dbReference>
<dbReference type="PDB" id="4FM9">
    <property type="method" value="X-ray"/>
    <property type="resolution" value="2.90 A"/>
    <property type="chains" value="A=431-1193"/>
</dbReference>
<dbReference type="PDB" id="4R1F">
    <property type="method" value="X-ray"/>
    <property type="resolution" value="2.51 A"/>
    <property type="chains" value="A/B/C/D=29-428"/>
</dbReference>
<dbReference type="PDB" id="5GWK">
    <property type="method" value="X-ray"/>
    <property type="resolution" value="3.15 A"/>
    <property type="chains" value="A/B=429-1188"/>
</dbReference>
<dbReference type="PDB" id="5NNE">
    <property type="method" value="X-ray"/>
    <property type="resolution" value="1.15 A"/>
    <property type="chains" value="C=1198-1207"/>
</dbReference>
<dbReference type="PDB" id="6ZY5">
    <property type="method" value="EM"/>
    <property type="resolution" value="3.60 A"/>
    <property type="chains" value="A/B=1-1531"/>
</dbReference>
<dbReference type="PDB" id="6ZY6">
    <property type="method" value="EM"/>
    <property type="resolution" value="4.10 A"/>
    <property type="chains" value="A/B=1-1531"/>
</dbReference>
<dbReference type="PDB" id="6ZY7">
    <property type="method" value="EM"/>
    <property type="resolution" value="4.64 A"/>
    <property type="chains" value="A/B=1-1531"/>
</dbReference>
<dbReference type="PDB" id="6ZY8">
    <property type="method" value="EM"/>
    <property type="resolution" value="7.40 A"/>
    <property type="chains" value="A/B=1-1531"/>
</dbReference>
<dbReference type="PDB" id="8W50">
    <property type="method" value="X-ray"/>
    <property type="resolution" value="2.67 A"/>
    <property type="chains" value="A/B/C/D=429-1188"/>
</dbReference>
<dbReference type="PDBsum" id="1ZXM"/>
<dbReference type="PDBsum" id="1ZXN"/>
<dbReference type="PDBsum" id="4FM9"/>
<dbReference type="PDBsum" id="4R1F"/>
<dbReference type="PDBsum" id="5GWK"/>
<dbReference type="PDBsum" id="5NNE"/>
<dbReference type="PDBsum" id="6ZY5"/>
<dbReference type="PDBsum" id="6ZY6"/>
<dbReference type="PDBsum" id="6ZY7"/>
<dbReference type="PDBsum" id="6ZY8"/>
<dbReference type="PDBsum" id="8W50"/>
<dbReference type="EMDB" id="EMD-11550"/>
<dbReference type="EMDB" id="EMD-11551"/>
<dbReference type="EMDB" id="EMD-11552"/>
<dbReference type="EMDB" id="EMD-11553"/>
<dbReference type="EMDB" id="EMD-11554"/>
<dbReference type="SMR" id="P11388"/>
<dbReference type="BioGRID" id="113006">
    <property type="interactions" value="537"/>
</dbReference>
<dbReference type="CORUM" id="P11388"/>
<dbReference type="DIP" id="DIP-33887N"/>
<dbReference type="FunCoup" id="P11388">
    <property type="interactions" value="1761"/>
</dbReference>
<dbReference type="IntAct" id="P11388">
    <property type="interactions" value="278"/>
</dbReference>
<dbReference type="MINT" id="P11388"/>
<dbReference type="STRING" id="9606.ENSP00000411532"/>
<dbReference type="BindingDB" id="P11388"/>
<dbReference type="ChEMBL" id="CHEMBL1806"/>
<dbReference type="DrugBank" id="DB05706">
    <property type="generic name" value="13-deoxydoxorubicin"/>
</dbReference>
<dbReference type="DrugBank" id="DB04745">
    <property type="generic name" value="2-Hydroxyquinoline"/>
</dbReference>
<dbReference type="DrugBank" id="DB11617">
    <property type="generic name" value="Aclarubicin"/>
</dbReference>
<dbReference type="DrugBank" id="DB06013">
    <property type="generic name" value="Aldoxorubicin"/>
</dbReference>
<dbReference type="DrugBank" id="DB05022">
    <property type="generic name" value="Amonafide"/>
</dbReference>
<dbReference type="DrugBank" id="DB06263">
    <property type="generic name" value="Amrubicin"/>
</dbReference>
<dbReference type="DrugBank" id="DB00276">
    <property type="generic name" value="Amsacrine"/>
</dbReference>
<dbReference type="DrugBank" id="DB06420">
    <property type="generic name" value="Annamycin"/>
</dbReference>
<dbReference type="DrugBank" id="DB04975">
    <property type="generic name" value="Banoxantrone"/>
</dbReference>
<dbReference type="DrugBank" id="DB06362">
    <property type="generic name" value="Becatecarin"/>
</dbReference>
<dbReference type="DrugBank" id="DB17149">
    <property type="generic name" value="Berubicin"/>
</dbReference>
<dbReference type="DrugBank" id="DB00827">
    <property type="generic name" value="Cinoxacin"/>
</dbReference>
<dbReference type="DrugBank" id="DB00537">
    <property type="generic name" value="Ciprofloxacin"/>
</dbReference>
<dbReference type="DrugBank" id="DB03966">
    <property type="generic name" value="Clorobiocin"/>
</dbReference>
<dbReference type="DrugBank" id="DB00970">
    <property type="generic name" value="Dactinomycin"/>
</dbReference>
<dbReference type="DrugBank" id="DB12804">
    <property type="generic name" value="Daniquidone"/>
</dbReference>
<dbReference type="DrugBank" id="DB00694">
    <property type="generic name" value="Daunorubicin"/>
</dbReference>
<dbReference type="DrugBank" id="DB06421">
    <property type="generic name" value="Declopramide"/>
</dbReference>
<dbReference type="DrugBank" id="DB00380">
    <property type="generic name" value="Dexrazoxane"/>
</dbReference>
<dbReference type="DrugBank" id="DB00997">
    <property type="generic name" value="Doxorubicin"/>
</dbReference>
<dbReference type="DrugBank" id="DB17026">
    <property type="generic name" value="Ellipticine"/>
</dbReference>
<dbReference type="DrugBank" id="DB05129">
    <property type="generic name" value="Elsamitrucin"/>
</dbReference>
<dbReference type="DrugBank" id="DB00467">
    <property type="generic name" value="Enoxacin"/>
</dbReference>
<dbReference type="DrugBank" id="DB00445">
    <property type="generic name" value="Epirubicin"/>
</dbReference>
<dbReference type="DrugBank" id="DB00773">
    <property type="generic name" value="Etoposide"/>
</dbReference>
<dbReference type="DrugBank" id="DB09047">
    <property type="generic name" value="Finafloxacin"/>
</dbReference>
<dbReference type="DrugBank" id="DB04576">
    <property type="generic name" value="Fleroxacin"/>
</dbReference>
<dbReference type="DrugBank" id="DB06160">
    <property type="generic name" value="Garenoxacin"/>
</dbReference>
<dbReference type="DrugBank" id="DB01645">
    <property type="generic name" value="Genistein"/>
</dbReference>
<dbReference type="DrugBank" id="DB12134">
    <property type="generic name" value="Gepotidacin"/>
</dbReference>
<dbReference type="DrugBank" id="DB01177">
    <property type="generic name" value="Idarubicin"/>
</dbReference>
<dbReference type="DrugBank" id="DB00978">
    <property type="generic name" value="Lomefloxacin"/>
</dbReference>
<dbReference type="DrugBank" id="DB04967">
    <property type="generic name" value="Lucanthone"/>
</dbReference>
<dbReference type="DrugBank" id="DB12622">
    <property type="generic name" value="Lupeol"/>
</dbReference>
<dbReference type="DrugBank" id="DB01204">
    <property type="generic name" value="Mitoxantrone"/>
</dbReference>
<dbReference type="DrugBank" id="DB00218">
    <property type="generic name" value="Moxifloxacin"/>
</dbReference>
<dbReference type="DrugBank" id="DB00779">
    <property type="generic name" value="Nalidixic acid"/>
</dbReference>
<dbReference type="DrugBank" id="DB01059">
    <property type="generic name" value="Norfloxacin"/>
</dbReference>
<dbReference type="DrugBank" id="DB01051">
    <property type="generic name" value="Novobiocin"/>
</dbReference>
<dbReference type="DrugBank" id="DB01165">
    <property type="generic name" value="Ofloxacin"/>
</dbReference>
<dbReference type="DrugBank" id="DB00487">
    <property type="generic name" value="Pefloxacin"/>
</dbReference>
<dbReference type="DrugBank" id="DB06193">
    <property type="generic name" value="Pixantrone"/>
</dbReference>
<dbReference type="DrugBank" id="DB01179">
    <property type="generic name" value="Podofilox"/>
</dbReference>
<dbReference type="DrugBank" id="DB12549">
    <property type="generic name" value="Pyrazoloacridine"/>
</dbReference>
<dbReference type="DrugBank" id="DB00817">
    <property type="generic name" value="Rosoxacin"/>
</dbReference>
<dbReference type="DrugBank" id="DB05920">
    <property type="generic name" value="RTA 744"/>
</dbReference>
<dbReference type="DrugBank" id="DB12410">
    <property type="generic name" value="Sabarubicin"/>
</dbReference>
<dbReference type="DrugBank" id="DB04978">
    <property type="generic name" value="SP1049C"/>
</dbReference>
<dbReference type="DrugBank" id="DB01208">
    <property type="generic name" value="Sparfloxacin"/>
</dbReference>
<dbReference type="DrugBank" id="DB00444">
    <property type="generic name" value="Teniposide"/>
</dbReference>
<dbReference type="DrugBank" id="DB04858">
    <property type="generic name" value="Tirapazamine"/>
</dbReference>
<dbReference type="DrugBank" id="DB00685">
    <property type="generic name" value="Trovafloxacin"/>
</dbReference>
<dbReference type="DrugBank" id="DB00385">
    <property type="generic name" value="Valrubicin"/>
</dbReference>
<dbReference type="DrugBank" id="DB11999">
    <property type="generic name" value="Vosaroxin"/>
</dbReference>
<dbReference type="DrugBank" id="DB06364">
    <property type="generic name" value="XR5944"/>
</dbReference>
<dbReference type="DrugBank" id="DB06042">
    <property type="generic name" value="ZEN-012"/>
</dbReference>
<dbReference type="DrugCentral" id="P11388"/>
<dbReference type="GuidetoPHARMACOLOGY" id="2637"/>
<dbReference type="CarbonylDB" id="P11388"/>
<dbReference type="GlyGen" id="P11388">
    <property type="glycosylation" value="11 sites, 2 N-linked glycans (2 sites), 1 O-linked glycan (8 sites)"/>
</dbReference>
<dbReference type="iPTMnet" id="P11388"/>
<dbReference type="MetOSite" id="P11388"/>
<dbReference type="PhosphoSitePlus" id="P11388"/>
<dbReference type="SwissPalm" id="P11388"/>
<dbReference type="BioMuta" id="TOP2A"/>
<dbReference type="DMDM" id="13959709"/>
<dbReference type="CPTAC" id="CPTAC-1187"/>
<dbReference type="jPOST" id="P11388"/>
<dbReference type="MassIVE" id="P11388"/>
<dbReference type="PaxDb" id="9606-ENSP00000411532"/>
<dbReference type="PeptideAtlas" id="P11388"/>
<dbReference type="ProteomicsDB" id="52767">
    <molecule id="P11388-1"/>
</dbReference>
<dbReference type="ProteomicsDB" id="52768">
    <molecule id="P11388-2"/>
</dbReference>
<dbReference type="ProteomicsDB" id="52769">
    <molecule id="P11388-3"/>
</dbReference>
<dbReference type="ProteomicsDB" id="52770">
    <molecule id="P11388-4"/>
</dbReference>
<dbReference type="Pumba" id="P11388"/>
<dbReference type="Antibodypedia" id="1583">
    <property type="antibodies" value="1563 antibodies from 45 providers"/>
</dbReference>
<dbReference type="DNASU" id="7153"/>
<dbReference type="Ensembl" id="ENST00000423485.6">
    <molecule id="P11388-1"/>
    <property type="protein sequence ID" value="ENSP00000411532.1"/>
    <property type="gene ID" value="ENSG00000131747.15"/>
</dbReference>
<dbReference type="GeneID" id="7153"/>
<dbReference type="KEGG" id="hsa:7153"/>
<dbReference type="MANE-Select" id="ENST00000423485.6">
    <property type="protein sequence ID" value="ENSP00000411532.1"/>
    <property type="RefSeq nucleotide sequence ID" value="NM_001067.4"/>
    <property type="RefSeq protein sequence ID" value="NP_001058.2"/>
</dbReference>
<dbReference type="UCSC" id="uc002huq.4">
    <molecule id="P11388-1"/>
    <property type="organism name" value="human"/>
</dbReference>
<dbReference type="AGR" id="HGNC:11989"/>
<dbReference type="CTD" id="7153"/>
<dbReference type="DisGeNET" id="7153"/>
<dbReference type="GeneCards" id="TOP2A"/>
<dbReference type="HGNC" id="HGNC:11989">
    <property type="gene designation" value="TOP2A"/>
</dbReference>
<dbReference type="HPA" id="ENSG00000131747">
    <property type="expression patterns" value="Tissue enhanced (lymphoid tissue, testis)"/>
</dbReference>
<dbReference type="MalaCards" id="TOP2A"/>
<dbReference type="MIM" id="126430">
    <property type="type" value="gene"/>
</dbReference>
<dbReference type="neXtProt" id="NX_P11388"/>
<dbReference type="OpenTargets" id="ENSG00000131747"/>
<dbReference type="PharmGKB" id="PA354"/>
<dbReference type="VEuPathDB" id="HostDB:ENSG00000131747"/>
<dbReference type="eggNOG" id="KOG0355">
    <property type="taxonomic scope" value="Eukaryota"/>
</dbReference>
<dbReference type="GeneTree" id="ENSGT00940000157539"/>
<dbReference type="HOGENOM" id="CLU_001935_1_0_1"/>
<dbReference type="InParanoid" id="P11388"/>
<dbReference type="OMA" id="DVKPHMI"/>
<dbReference type="OrthoDB" id="276498at2759"/>
<dbReference type="PAN-GO" id="P11388">
    <property type="GO annotations" value="4 GO annotations based on evolutionary models"/>
</dbReference>
<dbReference type="PhylomeDB" id="P11388"/>
<dbReference type="TreeFam" id="TF105282"/>
<dbReference type="BRENDA" id="5.6.2.2">
    <property type="organism ID" value="2681"/>
</dbReference>
<dbReference type="BRENDA" id="5.99.1.3">
    <property type="organism ID" value="2681"/>
</dbReference>
<dbReference type="PathwayCommons" id="P11388"/>
<dbReference type="Reactome" id="R-HSA-1362277">
    <property type="pathway name" value="Transcription of E2F targets under negative control by DREAM complex"/>
</dbReference>
<dbReference type="Reactome" id="R-HSA-4615885">
    <property type="pathway name" value="SUMOylation of DNA replication proteins"/>
</dbReference>
<dbReference type="SignaLink" id="P11388"/>
<dbReference type="SIGNOR" id="P11388"/>
<dbReference type="BioGRID-ORCS" id="7153">
    <property type="hits" value="841 hits in 1180 CRISPR screens"/>
</dbReference>
<dbReference type="CD-CODE" id="232F8A39">
    <property type="entry name" value="P-body"/>
</dbReference>
<dbReference type="CD-CODE" id="8C2F96ED">
    <property type="entry name" value="Centrosome"/>
</dbReference>
<dbReference type="CD-CODE" id="91857CE7">
    <property type="entry name" value="Nucleolus"/>
</dbReference>
<dbReference type="CD-CODE" id="BA0A263B">
    <property type="entry name" value="eukaryotic topoisomerase ii"/>
</dbReference>
<dbReference type="ChiTaRS" id="TOP2A">
    <property type="organism name" value="human"/>
</dbReference>
<dbReference type="EvolutionaryTrace" id="P11388"/>
<dbReference type="GeneWiki" id="TOP2A"/>
<dbReference type="GenomeRNAi" id="7153"/>
<dbReference type="Pharos" id="P11388">
    <property type="development level" value="Tclin"/>
</dbReference>
<dbReference type="PRO" id="PR:P11388"/>
<dbReference type="Proteomes" id="UP000005640">
    <property type="component" value="Chromosome 17"/>
</dbReference>
<dbReference type="RNAct" id="P11388">
    <property type="molecule type" value="protein"/>
</dbReference>
<dbReference type="Bgee" id="ENSG00000131747">
    <property type="expression patterns" value="Expressed in ventricular zone and 144 other cell types or tissues"/>
</dbReference>
<dbReference type="ExpressionAtlas" id="P11388">
    <property type="expression patterns" value="baseline and differential"/>
</dbReference>
<dbReference type="GO" id="GO:0000775">
    <property type="term" value="C:chromosome, centromeric region"/>
    <property type="evidence" value="ECO:0007669"/>
    <property type="project" value="Ensembl"/>
</dbReference>
<dbReference type="GO" id="GO:0000793">
    <property type="term" value="C:condensed chromosome"/>
    <property type="evidence" value="ECO:0007669"/>
    <property type="project" value="Ensembl"/>
</dbReference>
<dbReference type="GO" id="GO:0005737">
    <property type="term" value="C:cytoplasm"/>
    <property type="evidence" value="ECO:0000314"/>
    <property type="project" value="UniProtKB"/>
</dbReference>
<dbReference type="GO" id="GO:0009330">
    <property type="term" value="C:DNA topoisomerase type II (double strand cut, ATP-hydrolyzing) complex"/>
    <property type="evidence" value="ECO:0000314"/>
    <property type="project" value="UniProtKB"/>
</dbReference>
<dbReference type="GO" id="GO:0001673">
    <property type="term" value="C:male germ cell nucleus"/>
    <property type="evidence" value="ECO:0007669"/>
    <property type="project" value="Ensembl"/>
</dbReference>
<dbReference type="GO" id="GO:0005730">
    <property type="term" value="C:nucleolus"/>
    <property type="evidence" value="ECO:0000314"/>
    <property type="project" value="HPA"/>
</dbReference>
<dbReference type="GO" id="GO:0005654">
    <property type="term" value="C:nucleoplasm"/>
    <property type="evidence" value="ECO:0000314"/>
    <property type="project" value="HPA"/>
</dbReference>
<dbReference type="GO" id="GO:0005634">
    <property type="term" value="C:nucleus"/>
    <property type="evidence" value="ECO:0000314"/>
    <property type="project" value="UniProtKB"/>
</dbReference>
<dbReference type="GO" id="GO:0032991">
    <property type="term" value="C:protein-containing complex"/>
    <property type="evidence" value="ECO:0000314"/>
    <property type="project" value="UniProtKB"/>
</dbReference>
<dbReference type="GO" id="GO:1990904">
    <property type="term" value="C:ribonucleoprotein complex"/>
    <property type="evidence" value="ECO:0000314"/>
    <property type="project" value="UniProtKB"/>
</dbReference>
<dbReference type="GO" id="GO:0005524">
    <property type="term" value="F:ATP binding"/>
    <property type="evidence" value="ECO:0007669"/>
    <property type="project" value="UniProtKB-KW"/>
</dbReference>
<dbReference type="GO" id="GO:0008094">
    <property type="term" value="F:ATP-dependent activity, acting on DNA"/>
    <property type="evidence" value="ECO:0000314"/>
    <property type="project" value="UniProtKB"/>
</dbReference>
<dbReference type="GO" id="GO:0003682">
    <property type="term" value="F:chromatin binding"/>
    <property type="evidence" value="ECO:0000314"/>
    <property type="project" value="UniProtKB"/>
</dbReference>
<dbReference type="GO" id="GO:0003677">
    <property type="term" value="F:DNA binding"/>
    <property type="evidence" value="ECO:0000314"/>
    <property type="project" value="UniProtKB"/>
</dbReference>
<dbReference type="GO" id="GO:0008301">
    <property type="term" value="F:DNA binding, bending"/>
    <property type="evidence" value="ECO:0000314"/>
    <property type="project" value="UniProtKB"/>
</dbReference>
<dbReference type="GO" id="GO:0003918">
    <property type="term" value="F:DNA topoisomerase type II (double strand cut, ATP-hydrolyzing) activity"/>
    <property type="evidence" value="ECO:0000314"/>
    <property type="project" value="UniProtKB"/>
</dbReference>
<dbReference type="GO" id="GO:0000287">
    <property type="term" value="F:magnesium ion binding"/>
    <property type="evidence" value="ECO:0000314"/>
    <property type="project" value="UniProtKB"/>
</dbReference>
<dbReference type="GO" id="GO:0046982">
    <property type="term" value="F:protein heterodimerization activity"/>
    <property type="evidence" value="ECO:0000353"/>
    <property type="project" value="UniProtKB"/>
</dbReference>
<dbReference type="GO" id="GO:0042803">
    <property type="term" value="F:protein homodimerization activity"/>
    <property type="evidence" value="ECO:0000353"/>
    <property type="project" value="UniProtKB"/>
</dbReference>
<dbReference type="GO" id="GO:0005080">
    <property type="term" value="F:protein kinase C binding"/>
    <property type="evidence" value="ECO:0000353"/>
    <property type="project" value="UniProtKB"/>
</dbReference>
<dbReference type="GO" id="GO:0003723">
    <property type="term" value="F:RNA binding"/>
    <property type="evidence" value="ECO:0007005"/>
    <property type="project" value="UniProtKB"/>
</dbReference>
<dbReference type="GO" id="GO:0043130">
    <property type="term" value="F:ubiquitin binding"/>
    <property type="evidence" value="ECO:0000315"/>
    <property type="project" value="UniProtKB"/>
</dbReference>
<dbReference type="GO" id="GO:0030263">
    <property type="term" value="P:apoptotic chromosome condensation"/>
    <property type="evidence" value="ECO:0000314"/>
    <property type="project" value="UniProtKB"/>
</dbReference>
<dbReference type="GO" id="GO:0006325">
    <property type="term" value="P:chromatin organization"/>
    <property type="evidence" value="ECO:0000315"/>
    <property type="project" value="UniProtKB"/>
</dbReference>
<dbReference type="GO" id="GO:0007059">
    <property type="term" value="P:chromosome segregation"/>
    <property type="evidence" value="ECO:0000315"/>
    <property type="project" value="UniProtKB"/>
</dbReference>
<dbReference type="GO" id="GO:0006974">
    <property type="term" value="P:DNA damage response"/>
    <property type="evidence" value="ECO:0000314"/>
    <property type="project" value="UniProtKB"/>
</dbReference>
<dbReference type="GO" id="GO:0006265">
    <property type="term" value="P:DNA topological change"/>
    <property type="evidence" value="ECO:0000314"/>
    <property type="project" value="UniProtKB"/>
</dbReference>
<dbReference type="GO" id="GO:0040016">
    <property type="term" value="P:embryonic cleavage"/>
    <property type="evidence" value="ECO:0007669"/>
    <property type="project" value="Ensembl"/>
</dbReference>
<dbReference type="GO" id="GO:0007143">
    <property type="term" value="P:female meiotic nuclear division"/>
    <property type="evidence" value="ECO:0007669"/>
    <property type="project" value="Ensembl"/>
</dbReference>
<dbReference type="GO" id="GO:0002244">
    <property type="term" value="P:hematopoietic progenitor cell differentiation"/>
    <property type="evidence" value="ECO:0007669"/>
    <property type="project" value="Ensembl"/>
</dbReference>
<dbReference type="GO" id="GO:0043065">
    <property type="term" value="P:positive regulation of apoptotic process"/>
    <property type="evidence" value="ECO:0000314"/>
    <property type="project" value="UniProtKB"/>
</dbReference>
<dbReference type="GO" id="GO:0045870">
    <property type="term" value="P:positive regulation of single stranded viral RNA replication via double stranded DNA intermediate"/>
    <property type="evidence" value="ECO:0000315"/>
    <property type="project" value="UniProtKB"/>
</dbReference>
<dbReference type="GO" id="GO:0045944">
    <property type="term" value="P:positive regulation of transcription by RNA polymerase II"/>
    <property type="evidence" value="ECO:0007669"/>
    <property type="project" value="Ensembl"/>
</dbReference>
<dbReference type="GO" id="GO:0042752">
    <property type="term" value="P:regulation of circadian rhythm"/>
    <property type="evidence" value="ECO:0000250"/>
    <property type="project" value="UniProtKB"/>
</dbReference>
<dbReference type="GO" id="GO:0000712">
    <property type="term" value="P:resolution of meiotic recombination intermediates"/>
    <property type="evidence" value="ECO:0000318"/>
    <property type="project" value="GO_Central"/>
</dbReference>
<dbReference type="GO" id="GO:0048511">
    <property type="term" value="P:rhythmic process"/>
    <property type="evidence" value="ECO:0007669"/>
    <property type="project" value="UniProtKB-KW"/>
</dbReference>
<dbReference type="GO" id="GO:0000819">
    <property type="term" value="P:sister chromatid segregation"/>
    <property type="evidence" value="ECO:0000318"/>
    <property type="project" value="GO_Central"/>
</dbReference>
<dbReference type="CDD" id="cd16930">
    <property type="entry name" value="HATPase_TopII-like"/>
    <property type="match status" value="1"/>
</dbReference>
<dbReference type="CDD" id="cd00187">
    <property type="entry name" value="TOP4c"/>
    <property type="match status" value="1"/>
</dbReference>
<dbReference type="CDD" id="cd03481">
    <property type="entry name" value="TopoIIA_Trans_ScTopoIIA"/>
    <property type="match status" value="1"/>
</dbReference>
<dbReference type="CDD" id="cd03365">
    <property type="entry name" value="TOPRIM_TopoIIA"/>
    <property type="match status" value="1"/>
</dbReference>
<dbReference type="FunFam" id="1.10.268.10:FF:000002">
    <property type="entry name" value="DNA topoisomerase 2"/>
    <property type="match status" value="1"/>
</dbReference>
<dbReference type="FunFam" id="3.30.1360.40:FF:000003">
    <property type="entry name" value="DNA topoisomerase 2"/>
    <property type="match status" value="1"/>
</dbReference>
<dbReference type="FunFam" id="3.30.1490.30:FF:000001">
    <property type="entry name" value="DNA topoisomerase 2"/>
    <property type="match status" value="1"/>
</dbReference>
<dbReference type="FunFam" id="3.30.230.10:FF:000008">
    <property type="entry name" value="DNA topoisomerase 2"/>
    <property type="match status" value="1"/>
</dbReference>
<dbReference type="FunFam" id="3.30.565.10:FF:000004">
    <property type="entry name" value="DNA topoisomerase 2"/>
    <property type="match status" value="1"/>
</dbReference>
<dbReference type="FunFam" id="3.40.50.670:FF:000001">
    <property type="entry name" value="DNA topoisomerase 2"/>
    <property type="match status" value="2"/>
</dbReference>
<dbReference type="FunFam" id="3.90.199.10:FF:000002">
    <property type="entry name" value="DNA topoisomerase 2"/>
    <property type="match status" value="1"/>
</dbReference>
<dbReference type="Gene3D" id="3.30.1360.40">
    <property type="match status" value="1"/>
</dbReference>
<dbReference type="Gene3D" id="3.30.1490.30">
    <property type="match status" value="1"/>
</dbReference>
<dbReference type="Gene3D" id="3.30.230.10">
    <property type="match status" value="1"/>
</dbReference>
<dbReference type="Gene3D" id="3.40.50.670">
    <property type="match status" value="1"/>
</dbReference>
<dbReference type="Gene3D" id="3.30.565.10">
    <property type="entry name" value="Histidine kinase-like ATPase, C-terminal domain"/>
    <property type="match status" value="1"/>
</dbReference>
<dbReference type="Gene3D" id="3.90.199.10">
    <property type="entry name" value="Topoisomerase II, domain 5"/>
    <property type="match status" value="1"/>
</dbReference>
<dbReference type="Gene3D" id="1.10.268.10">
    <property type="entry name" value="Topoisomerase, domain 3"/>
    <property type="match status" value="1"/>
</dbReference>
<dbReference type="InterPro" id="IPR050634">
    <property type="entry name" value="DNA_Topoisomerase_II"/>
</dbReference>
<dbReference type="InterPro" id="IPR012542">
    <property type="entry name" value="DTHCT"/>
</dbReference>
<dbReference type="InterPro" id="IPR036890">
    <property type="entry name" value="HATPase_C_sf"/>
</dbReference>
<dbReference type="InterPro" id="IPR020568">
    <property type="entry name" value="Ribosomal_Su5_D2-typ_SF"/>
</dbReference>
<dbReference type="InterPro" id="IPR014721">
    <property type="entry name" value="Ribsml_uS5_D2-typ_fold_subgr"/>
</dbReference>
<dbReference type="InterPro" id="IPR001241">
    <property type="entry name" value="Topo_IIA"/>
</dbReference>
<dbReference type="InterPro" id="IPR013760">
    <property type="entry name" value="Topo_IIA-like_dom_sf"/>
</dbReference>
<dbReference type="InterPro" id="IPR013758">
    <property type="entry name" value="Topo_IIA_A/C_ab"/>
</dbReference>
<dbReference type="InterPro" id="IPR013757">
    <property type="entry name" value="Topo_IIA_A_a_sf"/>
</dbReference>
<dbReference type="InterPro" id="IPR013759">
    <property type="entry name" value="Topo_IIA_B_C"/>
</dbReference>
<dbReference type="InterPro" id="IPR013506">
    <property type="entry name" value="Topo_IIA_bsu_dom2"/>
</dbReference>
<dbReference type="InterPro" id="IPR002205">
    <property type="entry name" value="Topo_IIA_dom_A"/>
</dbReference>
<dbReference type="InterPro" id="IPR001154">
    <property type="entry name" value="TopoII_euk"/>
</dbReference>
<dbReference type="InterPro" id="IPR018522">
    <property type="entry name" value="TopoIIA_CS"/>
</dbReference>
<dbReference type="InterPro" id="IPR031660">
    <property type="entry name" value="TOPRIM_C"/>
</dbReference>
<dbReference type="InterPro" id="IPR006171">
    <property type="entry name" value="TOPRIM_dom"/>
</dbReference>
<dbReference type="InterPro" id="IPR034157">
    <property type="entry name" value="TOPRIM_TopoII"/>
</dbReference>
<dbReference type="PANTHER" id="PTHR10169:SF61">
    <property type="entry name" value="DNA TOPOISOMERASE 2-ALPHA"/>
    <property type="match status" value="1"/>
</dbReference>
<dbReference type="PANTHER" id="PTHR10169">
    <property type="entry name" value="DNA TOPOISOMERASE/GYRASE"/>
    <property type="match status" value="1"/>
</dbReference>
<dbReference type="Pfam" id="PF00204">
    <property type="entry name" value="DNA_gyraseB"/>
    <property type="match status" value="1"/>
</dbReference>
<dbReference type="Pfam" id="PF00521">
    <property type="entry name" value="DNA_topoisoIV"/>
    <property type="match status" value="1"/>
</dbReference>
<dbReference type="Pfam" id="PF08070">
    <property type="entry name" value="DTHCT"/>
    <property type="match status" value="1"/>
</dbReference>
<dbReference type="Pfam" id="PF02518">
    <property type="entry name" value="HATPase_c"/>
    <property type="match status" value="1"/>
</dbReference>
<dbReference type="Pfam" id="PF01751">
    <property type="entry name" value="Toprim"/>
    <property type="match status" value="1"/>
</dbReference>
<dbReference type="Pfam" id="PF16898">
    <property type="entry name" value="TOPRIM_C"/>
    <property type="match status" value="1"/>
</dbReference>
<dbReference type="PRINTS" id="PR01158">
    <property type="entry name" value="TOPISMRASEII"/>
</dbReference>
<dbReference type="PRINTS" id="PR00418">
    <property type="entry name" value="TPI2FAMILY"/>
</dbReference>
<dbReference type="SMART" id="SM00433">
    <property type="entry name" value="TOP2c"/>
    <property type="match status" value="1"/>
</dbReference>
<dbReference type="SMART" id="SM00434">
    <property type="entry name" value="TOP4c"/>
    <property type="match status" value="1"/>
</dbReference>
<dbReference type="SUPFAM" id="SSF55874">
    <property type="entry name" value="ATPase domain of HSP90 chaperone/DNA topoisomerase II/histidine kinase"/>
    <property type="match status" value="1"/>
</dbReference>
<dbReference type="SUPFAM" id="SSF54211">
    <property type="entry name" value="Ribosomal protein S5 domain 2-like"/>
    <property type="match status" value="1"/>
</dbReference>
<dbReference type="SUPFAM" id="SSF56719">
    <property type="entry name" value="Type II DNA topoisomerase"/>
    <property type="match status" value="1"/>
</dbReference>
<dbReference type="PROSITE" id="PS52040">
    <property type="entry name" value="TOPO_IIA"/>
    <property type="match status" value="1"/>
</dbReference>
<dbReference type="PROSITE" id="PS00177">
    <property type="entry name" value="TOPOISOMERASE_II"/>
    <property type="match status" value="1"/>
</dbReference>
<dbReference type="PROSITE" id="PS50880">
    <property type="entry name" value="TOPRIM"/>
    <property type="match status" value="1"/>
</dbReference>
<feature type="chain" id="PRO_0000145363" description="DNA topoisomerase 2-alpha">
    <location>
        <begin position="1"/>
        <end position="1531"/>
    </location>
</feature>
<feature type="domain" description="Toprim" evidence="5">
    <location>
        <begin position="455"/>
        <end position="572"/>
    </location>
</feature>
<feature type="domain" description="Topo IIA-type catalytic" evidence="6">
    <location>
        <begin position="715"/>
        <end position="1171"/>
    </location>
</feature>
<feature type="region of interest" description="Interaction with DNA" evidence="41">
    <location>
        <begin position="342"/>
        <end position="344"/>
    </location>
</feature>
<feature type="region of interest" description="Interaction with DNA" evidence="23">
    <location>
        <begin position="990"/>
        <end position="999"/>
    </location>
</feature>
<feature type="region of interest" description="Disordered" evidence="7">
    <location>
        <begin position="1090"/>
        <end position="1123"/>
    </location>
</feature>
<feature type="region of interest" description="Disordered" evidence="7">
    <location>
        <begin position="1184"/>
        <end position="1531"/>
    </location>
</feature>
<feature type="region of interest" description="Interaction with PLSCR1" evidence="14">
    <location>
        <begin position="1433"/>
        <end position="1439"/>
    </location>
</feature>
<feature type="short sequence motif" description="Nuclear export signal">
    <location>
        <begin position="1018"/>
        <end position="1028"/>
    </location>
</feature>
<feature type="compositionally biased region" description="Acidic residues" evidence="7">
    <location>
        <begin position="1099"/>
        <end position="1108"/>
    </location>
</feature>
<feature type="compositionally biased region" description="Basic and acidic residues" evidence="7">
    <location>
        <begin position="1256"/>
        <end position="1272"/>
    </location>
</feature>
<feature type="compositionally biased region" description="Acidic residues" evidence="7">
    <location>
        <begin position="1330"/>
        <end position="1349"/>
    </location>
</feature>
<feature type="compositionally biased region" description="Low complexity" evidence="7">
    <location>
        <begin position="1406"/>
        <end position="1431"/>
    </location>
</feature>
<feature type="compositionally biased region" description="Basic and acidic residues" evidence="7">
    <location>
        <begin position="1491"/>
        <end position="1502"/>
    </location>
</feature>
<feature type="active site" description="O-(5'-phospho-DNA)-tyrosine intermediate" evidence="6">
    <location>
        <position position="805"/>
    </location>
</feature>
<feature type="binding site" evidence="11 27">
    <location>
        <position position="91"/>
    </location>
    <ligand>
        <name>ATP</name>
        <dbReference type="ChEBI" id="CHEBI:30616"/>
    </ligand>
</feature>
<feature type="binding site" evidence="11 27">
    <location>
        <position position="120"/>
    </location>
    <ligand>
        <name>ATP</name>
        <dbReference type="ChEBI" id="CHEBI:30616"/>
    </ligand>
</feature>
<feature type="binding site" evidence="11 27">
    <location>
        <begin position="148"/>
        <end position="150"/>
    </location>
    <ligand>
        <name>ATP</name>
        <dbReference type="ChEBI" id="CHEBI:30616"/>
    </ligand>
</feature>
<feature type="binding site" evidence="11 27">
    <location>
        <begin position="161"/>
        <end position="168"/>
    </location>
    <ligand>
        <name>ATP</name>
        <dbReference type="ChEBI" id="CHEBI:30616"/>
    </ligand>
</feature>
<feature type="binding site" evidence="11 42">
    <location>
        <begin position="376"/>
        <end position="378"/>
    </location>
    <ligand>
        <name>ATP</name>
        <dbReference type="ChEBI" id="CHEBI:30616"/>
    </ligand>
</feature>
<feature type="binding site" evidence="5">
    <location>
        <position position="461"/>
    </location>
    <ligand>
        <name>Mg(2+)</name>
        <dbReference type="ChEBI" id="CHEBI:18420"/>
        <label>1</label>
        <note>catalytic</note>
    </ligand>
</feature>
<feature type="binding site" evidence="5">
    <location>
        <position position="541"/>
    </location>
    <ligand>
        <name>Mg(2+)</name>
        <dbReference type="ChEBI" id="CHEBI:18420"/>
        <label>1</label>
        <note>catalytic</note>
    </ligand>
</feature>
<feature type="binding site" evidence="23">
    <location>
        <position position="541"/>
    </location>
    <ligand>
        <name>Mg(2+)</name>
        <dbReference type="ChEBI" id="CHEBI:18420"/>
        <label>2</label>
    </ligand>
</feature>
<feature type="binding site" evidence="23">
    <location>
        <position position="543"/>
    </location>
    <ligand>
        <name>Mg(2+)</name>
        <dbReference type="ChEBI" id="CHEBI:18420"/>
        <label>2</label>
    </ligand>
</feature>
<feature type="site" description="Interaction with DNA" evidence="5">
    <location>
        <position position="489"/>
    </location>
</feature>
<feature type="site" description="Interaction with DNA" evidence="23">
    <location>
        <position position="492"/>
    </location>
</feature>
<feature type="site" description="Interaction with DNA" evidence="23">
    <location>
        <position position="661"/>
    </location>
</feature>
<feature type="site" description="Interaction with DNA" evidence="23">
    <location>
        <position position="662"/>
    </location>
</feature>
<feature type="site" description="Interaction with DNA" evidence="23">
    <location>
        <position position="723"/>
    </location>
</feature>
<feature type="site" description="Interaction with DNA" evidence="23">
    <location>
        <position position="757"/>
    </location>
</feature>
<feature type="site" description="Interaction with DNA" evidence="23">
    <location>
        <position position="763"/>
    </location>
</feature>
<feature type="site" description="Transition state stabilizer" evidence="1">
    <location>
        <position position="804"/>
    </location>
</feature>
<feature type="site" description="Important for DNA bending; intercalates between base pairs of target DNA" evidence="1">
    <location>
        <position position="856"/>
    </location>
</feature>
<feature type="site" description="Interaction with DNA" evidence="23">
    <location>
        <position position="931"/>
    </location>
</feature>
<feature type="modified residue" description="N-acetylmethionine" evidence="33 50 51 52">
    <location>
        <position position="1"/>
    </location>
</feature>
<feature type="modified residue" description="Phosphoserine" evidence="44 48 50 51 53">
    <location>
        <position position="4"/>
    </location>
</feature>
<feature type="modified residue" description="Phosphothreonine" evidence="50">
    <location>
        <position position="282"/>
    </location>
</feature>
<feature type="modified residue" description="Phosphoserine; by CK1" evidence="17 34 44 47 50 51 53">
    <location>
        <position position="1106"/>
    </location>
</feature>
<feature type="modified residue" description="Phosphothreonine" evidence="50">
    <location>
        <position position="1205"/>
    </location>
</feature>
<feature type="modified residue" description="Phosphoserine" evidence="43 44 47 48 50 51 53">
    <location>
        <position position="1213"/>
    </location>
</feature>
<feature type="modified residue" description="Phosphothreonine" evidence="53">
    <location>
        <position position="1244"/>
    </location>
</feature>
<feature type="modified residue" description="Phosphoserine" evidence="44 45 48 49 50 51 53">
    <location>
        <position position="1247"/>
    </location>
</feature>
<feature type="modified residue" description="Phosphoserine" evidence="51">
    <location>
        <position position="1295"/>
    </location>
</feature>
<feature type="modified residue" description="Phosphoserine" evidence="51">
    <location>
        <position position="1297"/>
    </location>
</feature>
<feature type="modified residue" description="Phosphoserine" evidence="51">
    <location>
        <position position="1299"/>
    </location>
</feature>
<feature type="modified residue" description="Phosphoserine" evidence="51">
    <location>
        <position position="1302"/>
    </location>
</feature>
<feature type="modified residue" description="Phosphothreonine" evidence="4">
    <location>
        <position position="1327"/>
    </location>
</feature>
<feature type="modified residue" description="Phosphoserine" evidence="44 47 48 50 51">
    <location>
        <position position="1332"/>
    </location>
</feature>
<feature type="modified residue" description="Phosphoserine" evidence="44 47 48 50 51">
    <location>
        <position position="1337"/>
    </location>
</feature>
<feature type="modified residue" description="Phosphothreonine; by PLK3" evidence="15 44 47 50 51">
    <location>
        <position position="1343"/>
    </location>
</feature>
<feature type="modified residue" description="Phosphoserine" evidence="44 47 50 51">
    <location>
        <position position="1351"/>
    </location>
</feature>
<feature type="modified residue" description="Phosphoserine" evidence="44 50 51">
    <location>
        <position position="1354"/>
    </location>
</feature>
<feature type="modified residue" description="Phosphoserine" evidence="43 44 49 50 51 53">
    <location>
        <position position="1374"/>
    </location>
</feature>
<feature type="modified residue" description="Phosphoserine" evidence="43 44 48 50 51 53">
    <location>
        <position position="1377"/>
    </location>
</feature>
<feature type="modified residue" description="Phosphoserine" evidence="49">
    <location>
        <position position="1387"/>
    </location>
</feature>
<feature type="modified residue" description="Phosphoserine" evidence="53">
    <location>
        <position position="1391"/>
    </location>
</feature>
<feature type="modified residue" description="Phosphoserine" evidence="47">
    <location>
        <position position="1392"/>
    </location>
</feature>
<feature type="modified residue" description="Phosphoserine" evidence="47 49">
    <location>
        <position position="1393"/>
    </location>
</feature>
<feature type="modified residue" description="N6-acetyllysine; alternate" evidence="4">
    <location>
        <position position="1422"/>
    </location>
</feature>
<feature type="modified residue" description="N6-acetyllysine; alternate" evidence="4">
    <location>
        <position position="1442"/>
    </location>
</feature>
<feature type="modified residue" description="Phosphoserine" evidence="47 53">
    <location>
        <position position="1449"/>
    </location>
</feature>
<feature type="modified residue" description="Phosphoserine; by CK2" evidence="8 47 51 53">
    <location>
        <position position="1469"/>
    </location>
</feature>
<feature type="modified residue" description="Phosphothreonine" evidence="47 51">
    <location>
        <position position="1470"/>
    </location>
</feature>
<feature type="modified residue" description="Phosphoserine" evidence="47 50 51 53">
    <location>
        <position position="1471"/>
    </location>
</feature>
<feature type="modified residue" description="Phosphoserine" evidence="47 50 51 53">
    <location>
        <position position="1474"/>
    </location>
</feature>
<feature type="modified residue" description="Phosphoserine" evidence="51">
    <location>
        <position position="1476"/>
    </location>
</feature>
<feature type="modified residue" description="Phosphoserine" evidence="50 53">
    <location>
        <position position="1495"/>
    </location>
</feature>
<feature type="modified residue" description="Phosphoserine" evidence="46 49 50 53">
    <location>
        <position position="1504"/>
    </location>
</feature>
<feature type="modified residue" description="Phosphoserine" evidence="43 44 47 49 50 51">
    <location>
        <position position="1525"/>
    </location>
</feature>
<feature type="cross-link" description="Glycyl lysine isopeptide (Lys-Gly) (interchain with G-Cter in SUMO2)" evidence="58">
    <location>
        <position position="17"/>
    </location>
</feature>
<feature type="cross-link" description="Glycyl lysine isopeptide (Lys-Gly) (interchain with G-Cter in SUMO2)" evidence="58">
    <location>
        <position position="156"/>
    </location>
</feature>
<feature type="cross-link" description="Glycyl lysine isopeptide (Lys-Gly) (interchain with G-Cter in SUMO2)" evidence="58">
    <location>
        <position position="157"/>
    </location>
</feature>
<feature type="cross-link" description="Glycyl lysine isopeptide (Lys-Gly) (interchain with G-Cter in SUMO2)" evidence="58">
    <location>
        <position position="261"/>
    </location>
</feature>
<feature type="cross-link" description="Glycyl lysine isopeptide (Lys-Gly) (interchain with G-Cter in SUMO2)" evidence="58">
    <location>
        <position position="352"/>
    </location>
</feature>
<feature type="cross-link" description="Glycyl lysine isopeptide (Lys-Gly) (interchain with G-Cter in SUMO2)" evidence="58">
    <location>
        <position position="386"/>
    </location>
</feature>
<feature type="cross-link" description="Glycyl lysine isopeptide (Lys-Gly) (interchain with G-Cter in SUMO2)" evidence="58">
    <location>
        <position position="397"/>
    </location>
</feature>
<feature type="cross-link" description="Glycyl lysine isopeptide (Lys-Gly) (interchain with G-Cter in SUMO2)" evidence="58">
    <location>
        <position position="416"/>
    </location>
</feature>
<feature type="cross-link" description="Glycyl lysine isopeptide (Lys-Gly) (interchain with G-Cter in SUMO2)" evidence="58">
    <location>
        <position position="418"/>
    </location>
</feature>
<feature type="cross-link" description="Glycyl lysine isopeptide (Lys-Gly) (interchain with G-Cter in SUMO2)" evidence="58">
    <location>
        <position position="425"/>
    </location>
</feature>
<feature type="cross-link" description="Glycyl lysine isopeptide (Lys-Gly) (interchain with G-Cter in SUMO2)" evidence="58">
    <location>
        <position position="440"/>
    </location>
</feature>
<feature type="cross-link" description="Glycyl lysine isopeptide (Lys-Gly) (interchain with G-Cter in SUMO2)" evidence="58">
    <location>
        <position position="466"/>
    </location>
</feature>
<feature type="cross-link" description="Glycyl lysine isopeptide (Lys-Gly) (interchain with G-Cter in SUMO2)" evidence="58">
    <location>
        <position position="480"/>
    </location>
</feature>
<feature type="cross-link" description="Glycyl lysine isopeptide (Lys-Gly) (interchain with G-Cter in SUMO2)" evidence="58">
    <location>
        <position position="529"/>
    </location>
</feature>
<feature type="cross-link" description="Glycyl lysine isopeptide (Lys-Gly) (interchain with G-Cter in SUMO2)" evidence="58">
    <location>
        <position position="584"/>
    </location>
</feature>
<feature type="cross-link" description="Glycyl lysine isopeptide (Lys-Gly) (interchain with G-Cter in SUMO2)" evidence="58">
    <location>
        <position position="599"/>
    </location>
</feature>
<feature type="cross-link" description="Glycyl lysine isopeptide (Lys-Gly) (interchain with G-Cter in SUMO2)" evidence="58">
    <location>
        <position position="614"/>
    </location>
</feature>
<feature type="cross-link" description="Glycyl lysine isopeptide (Lys-Gly) (interchain with G-Cter in SUMO2)" evidence="58">
    <location>
        <position position="622"/>
    </location>
</feature>
<feature type="cross-link" description="Glycyl lysine isopeptide (Lys-Gly) (interchain with G-Cter in SUMO2)" evidence="58">
    <location>
        <position position="625"/>
    </location>
</feature>
<feature type="cross-link" description="Glycyl lysine isopeptide (Lys-Gly) (interchain with G-Cter in SUMO2)" evidence="58">
    <location>
        <position position="632"/>
    </location>
</feature>
<feature type="cross-link" description="Glycyl lysine isopeptide (Lys-Gly) (interchain with G-Cter in SUMO2)" evidence="57 58">
    <location>
        <position position="639"/>
    </location>
</feature>
<feature type="cross-link" description="Glycyl lysine isopeptide (Lys-Gly) (interchain with G-Cter in SUMO2)" evidence="58">
    <location>
        <position position="655"/>
    </location>
</feature>
<feature type="cross-link" description="Glycyl lysine isopeptide (Lys-Gly) (interchain with G-Cter in SUMO2)" evidence="57 58">
    <location>
        <position position="662"/>
    </location>
</feature>
<feature type="cross-link" description="Glycyl lysine isopeptide (Lys-Gly) (interchain with G-Cter in SUMO2)" evidence="57 58">
    <location>
        <position position="676"/>
    </location>
</feature>
<feature type="cross-link" description="Glycyl lysine isopeptide (Lys-Gly) (interchain with G-Cter in SUMO2)" evidence="57 58">
    <location>
        <position position="1075"/>
    </location>
</feature>
<feature type="cross-link" description="Glycyl lysine isopeptide (Lys-Gly) (interchain with G-Cter in SUMO2)" evidence="58">
    <location>
        <position position="1114"/>
    </location>
</feature>
<feature type="cross-link" description="Glycyl lysine isopeptide (Lys-Gly) (interchain with G-Cter in SUMO2)" evidence="57 58">
    <location>
        <position position="1196"/>
    </location>
</feature>
<feature type="cross-link" description="Glycyl lysine isopeptide (Lys-Gly) (interchain with G-Cter in SUMO2)" evidence="58">
    <location>
        <position position="1204"/>
    </location>
</feature>
<feature type="cross-link" description="Glycyl lysine isopeptide (Lys-Gly) (interchain with G-Cter in SUMO2)" evidence="55 56 57 58">
    <location>
        <position position="1228"/>
    </location>
</feature>
<feature type="cross-link" description="Glycyl lysine isopeptide (Lys-Gly) (interchain with G-Cter in SUMO1); alternate" evidence="54">
    <location>
        <position position="1240"/>
    </location>
</feature>
<feature type="cross-link" description="Glycyl lysine isopeptide (Lys-Gly) (interchain with G-Cter in SUMO2); alternate" evidence="54 55 56 57 58">
    <location>
        <position position="1240"/>
    </location>
</feature>
<feature type="cross-link" description="Glycyl lysine isopeptide (Lys-Gly) (interchain with G-Cter in SUMO2)" evidence="58">
    <location>
        <position position="1259"/>
    </location>
</feature>
<feature type="cross-link" description="Glycyl lysine isopeptide (Lys-Gly) (interchain with G-Cter in SUMO2)" evidence="58">
    <location>
        <position position="1276"/>
    </location>
</feature>
<feature type="cross-link" description="Glycyl lysine isopeptide (Lys-Gly) (interchain with G-Cter in SUMO2)" evidence="58">
    <location>
        <position position="1283"/>
    </location>
</feature>
<feature type="cross-link" description="Glycyl lysine isopeptide (Lys-Gly) (interchain with G-Cter in SUMO2)" evidence="58">
    <location>
        <position position="1286"/>
    </location>
</feature>
<feature type="cross-link" description="Glycyl lysine isopeptide (Lys-Gly) (interchain with G-Cter in SUMO2)" evidence="58">
    <location>
        <position position="1363"/>
    </location>
</feature>
<feature type="cross-link" description="Glycyl lysine isopeptide (Lys-Gly) (interchain with G-Cter in SUMO2)" evidence="58">
    <location>
        <position position="1367"/>
    </location>
</feature>
<feature type="cross-link" description="Glycyl lysine isopeptide (Lys-Gly) (interchain with G-Cter in SUMO2)" evidence="58">
    <location>
        <position position="1373"/>
    </location>
</feature>
<feature type="cross-link" description="Glycyl lysine isopeptide (Lys-Gly) (interchain with G-Cter in SUMO2)" evidence="55 57 58">
    <location>
        <position position="1385"/>
    </location>
</feature>
<feature type="cross-link" description="Glycyl lysine isopeptide (Lys-Gly) (interchain with G-Cter in SUMO2); alternate" evidence="58">
    <location>
        <position position="1422"/>
    </location>
</feature>
<feature type="cross-link" description="Glycyl lysine isopeptide (Lys-Gly) (interchain with G-Cter in SUMO2); alternate" evidence="57 58">
    <location>
        <position position="1442"/>
    </location>
</feature>
<feature type="cross-link" description="Glycyl lysine isopeptide (Lys-Gly) (interchain with G-Cter in SUMO2)" evidence="58">
    <location>
        <position position="1454"/>
    </location>
</feature>
<feature type="cross-link" description="Glycyl lysine isopeptide (Lys-Gly) (interchain with G-Cter in SUMO2)" evidence="58">
    <location>
        <position position="1459"/>
    </location>
</feature>
<feature type="cross-link" description="Glycyl lysine isopeptide (Lys-Gly) (interchain with G-Cter in SUMO2)" evidence="58">
    <location>
        <position position="1484"/>
    </location>
</feature>
<feature type="cross-link" description="Glycyl lysine isopeptide (Lys-Gly) (interchain with G-Cter in SUMO2)" evidence="55 58">
    <location>
        <position position="1492"/>
    </location>
</feature>
<feature type="splice variant" id="VSP_006529" description="In isoform 3." evidence="35">
    <original>K</original>
    <variation>KSSKYWSSRKSKQHILLNFFVLFKFINDAFFGICPFK</variation>
    <location>
        <position position="321"/>
    </location>
</feature>
<feature type="splice variant" id="VSP_006530" description="In isoform 4." evidence="35">
    <original>Q</original>
    <variation>QRELCNGAILAHCNLRLMGSSDSPASASRVAGIAGGCHHTQLIFVFLVETGFHHVGQAGLERLTSGDPPASASQSSGITDVK</variation>
    <location>
        <position position="355"/>
    </location>
</feature>
<feature type="splice variant" id="VSP_006531" description="In isoform 2." evidence="35">
    <original>A</original>
    <variation>AHLYSRFLIDPFFPNMIPNMIFSFSKA</variation>
    <location>
        <position position="401"/>
    </location>
</feature>
<feature type="sequence variant" id="VAR_007532" description="In teniposide (VM-26) resistant cells; dbSNP:rs746765101." evidence="13">
    <original>R</original>
    <variation>Q</variation>
    <location>
        <position position="450"/>
    </location>
</feature>
<feature type="sequence variant" id="VAR_007533" description="In amsacrine resistant cells; dbSNP:rs267607133." evidence="12">
    <original>R</original>
    <variation>K</variation>
    <location>
        <position position="487"/>
    </location>
</feature>
<feature type="sequence variant" id="VAR_029245" description="In dbSNP:rs28969502.">
    <original>T</original>
    <variation>K</variation>
    <location>
        <position position="1324"/>
    </location>
</feature>
<feature type="sequence variant" id="VAR_052594" description="In dbSNP:rs34300454.">
    <original>G</original>
    <variation>D</variation>
    <location>
        <position position="1386"/>
    </location>
</feature>
<feature type="sequence variant" id="VAR_052595" description="In dbSNP:rs11540720.">
    <original>A</original>
    <variation>S</variation>
    <location>
        <position position="1515"/>
    </location>
</feature>
<feature type="mutagenesis site" description="Reduced enzyme activity; abolishes stimulation of ATPase activity upon DNA binding." evidence="24">
    <original>KKK</original>
    <variation>AAA</variation>
    <location>
        <begin position="342"/>
        <end position="344"/>
    </location>
</feature>
<feature type="mutagenesis site" description="Strongly reduced enzyme activity; abolishes stimulation of ATPase activity upon DNA binding." evidence="24">
    <original>KKK</original>
    <variation>EEE</variation>
    <location>
        <begin position="342"/>
        <end position="344"/>
    </location>
</feature>
<feature type="mutagenesis site" description="Impairs bending of target DNA. Strongly reduced DNA cleavage." evidence="19 22">
    <original>E</original>
    <variation>A</variation>
    <variation>C</variation>
    <location>
        <position position="461"/>
    </location>
</feature>
<feature type="mutagenesis site" description="Impairs bending of target DNA. Strongly reduced DNA cleavage." evidence="19 22">
    <original>D</original>
    <variation>A</variation>
    <variation>C</variation>
    <location>
        <position position="541"/>
    </location>
</feature>
<feature type="mutagenesis site" description="Impairs bending of target DNA. Strongly reduced DNA cleavage." evidence="19 22">
    <original>D</original>
    <variation>A</variation>
    <variation>C</variation>
    <location>
        <position position="543"/>
    </location>
</feature>
<feature type="mutagenesis site" description="Strongly reduced DNA cleavage." evidence="19">
    <original>D</original>
    <variation>A</variation>
    <variation>C</variation>
    <location>
        <position position="545"/>
    </location>
</feature>
<feature type="mutagenesis site" description="Abolishes binding to the antibody MPM2." evidence="8">
    <original>S</original>
    <variation>A</variation>
    <location>
        <position position="1469"/>
    </location>
</feature>
<feature type="sequence conflict" description="In Ref. 4; CAA09762." evidence="36" ref="4">
    <original>D</original>
    <variation>H</variation>
    <location>
        <position position="152"/>
    </location>
</feature>
<feature type="sequence conflict" description="In Ref. 4; CAA09762." evidence="36" ref="4">
    <original>E</original>
    <variation>Q</variation>
    <location>
        <position position="180"/>
    </location>
</feature>
<feature type="sequence conflict" description="In Ref. 4; CAA09762." evidence="36" ref="4">
    <original>D</original>
    <variation>H</variation>
    <location>
        <position position="327"/>
    </location>
</feature>
<feature type="sequence conflict" description="In Ref. 4; CAA09762." evidence="36" ref="4">
    <original>F</original>
    <variation>L</variation>
    <location>
        <position position="1022"/>
    </location>
</feature>
<feature type="sequence conflict" description="In Ref. 4; CAA09762." evidence="36" ref="4">
    <original>T</original>
    <variation>S</variation>
    <location>
        <position position="1274"/>
    </location>
</feature>
<feature type="sequence conflict" description="In Ref. 1; AAA61209." evidence="36" ref="1">
    <original>S</original>
    <variation>P</variation>
    <location>
        <position position="1295"/>
    </location>
</feature>
<feature type="helix" evidence="59">
    <location>
        <begin position="30"/>
        <end position="33"/>
    </location>
</feature>
<feature type="strand" evidence="59">
    <location>
        <begin position="34"/>
        <end position="36"/>
    </location>
</feature>
<feature type="helix" evidence="59">
    <location>
        <begin position="39"/>
        <end position="45"/>
    </location>
</feature>
<feature type="helix" evidence="59">
    <location>
        <begin position="48"/>
        <end position="51"/>
    </location>
</feature>
<feature type="strand" evidence="59">
    <location>
        <begin position="57"/>
        <end position="65"/>
    </location>
</feature>
<feature type="turn" evidence="59">
    <location>
        <begin position="66"/>
        <end position="68"/>
    </location>
</feature>
<feature type="strand" evidence="59">
    <location>
        <begin position="69"/>
        <end position="77"/>
    </location>
</feature>
<feature type="helix" evidence="59">
    <location>
        <begin position="79"/>
        <end position="98"/>
    </location>
</feature>
<feature type="strand" evidence="59">
    <location>
        <begin position="104"/>
        <end position="110"/>
    </location>
</feature>
<feature type="turn" evidence="59">
    <location>
        <begin position="111"/>
        <end position="114"/>
    </location>
</feature>
<feature type="strand" evidence="59">
    <location>
        <begin position="115"/>
        <end position="123"/>
    </location>
</feature>
<feature type="strand" evidence="59">
    <location>
        <begin position="128"/>
        <end position="130"/>
    </location>
</feature>
<feature type="turn" evidence="59">
    <location>
        <begin position="131"/>
        <end position="134"/>
    </location>
</feature>
<feature type="helix" evidence="59">
    <location>
        <begin position="137"/>
        <end position="143"/>
    </location>
</feature>
<feature type="strand" evidence="59">
    <location>
        <begin position="144"/>
        <end position="149"/>
    </location>
</feature>
<feature type="helix" evidence="59">
    <location>
        <begin position="153"/>
        <end position="155"/>
    </location>
</feature>
<feature type="helix" evidence="59">
    <location>
        <begin position="166"/>
        <end position="172"/>
    </location>
</feature>
<feature type="strand" evidence="59">
    <location>
        <begin position="174"/>
        <end position="183"/>
    </location>
</feature>
<feature type="turn" evidence="59">
    <location>
        <begin position="184"/>
        <end position="187"/>
    </location>
</feature>
<feature type="strand" evidence="59">
    <location>
        <begin position="188"/>
        <end position="195"/>
    </location>
</feature>
<feature type="turn" evidence="59">
    <location>
        <begin position="196"/>
        <end position="199"/>
    </location>
</feature>
<feature type="strand" evidence="59">
    <location>
        <begin position="205"/>
        <end position="208"/>
    </location>
</feature>
<feature type="strand" evidence="59">
    <location>
        <begin position="214"/>
        <end position="221"/>
    </location>
</feature>
<feature type="helix" evidence="59">
    <location>
        <begin position="223"/>
        <end position="226"/>
    </location>
</feature>
<feature type="helix" evidence="59">
    <location>
        <begin position="233"/>
        <end position="249"/>
    </location>
</feature>
<feature type="strand" evidence="59">
    <location>
        <begin position="250"/>
        <end position="252"/>
    </location>
</feature>
<feature type="strand" evidence="59">
    <location>
        <begin position="254"/>
        <end position="257"/>
    </location>
</feature>
<feature type="helix" evidence="59">
    <location>
        <begin position="267"/>
        <end position="275"/>
    </location>
</feature>
<feature type="strand" evidence="59">
    <location>
        <begin position="281"/>
        <end position="285"/>
    </location>
</feature>
<feature type="strand" evidence="59">
    <location>
        <begin position="289"/>
        <end position="294"/>
    </location>
</feature>
<feature type="strand" evidence="59">
    <location>
        <begin position="297"/>
        <end position="303"/>
    </location>
</feature>
<feature type="strand" evidence="59">
    <location>
        <begin position="305"/>
        <end position="307"/>
    </location>
</feature>
<feature type="strand" evidence="59">
    <location>
        <begin position="309"/>
        <end position="314"/>
    </location>
</feature>
<feature type="helix" evidence="59">
    <location>
        <begin position="324"/>
        <end position="341"/>
    </location>
</feature>
<feature type="strand" evidence="60">
    <location>
        <begin position="346"/>
        <end position="348"/>
    </location>
</feature>
<feature type="helix" evidence="59">
    <location>
        <begin position="353"/>
        <end position="357"/>
    </location>
</feature>
<feature type="strand" evidence="59">
    <location>
        <begin position="360"/>
        <end position="366"/>
    </location>
</feature>
<feature type="strand" evidence="59">
    <location>
        <begin position="373"/>
        <end position="375"/>
    </location>
</feature>
<feature type="helix" evidence="59">
    <location>
        <begin position="385"/>
        <end position="387"/>
    </location>
</feature>
<feature type="strand" evidence="59">
    <location>
        <begin position="388"/>
        <end position="390"/>
    </location>
</feature>
<feature type="helix" evidence="59">
    <location>
        <begin position="396"/>
        <end position="402"/>
    </location>
</feature>
<feature type="helix" evidence="59">
    <location>
        <begin position="407"/>
        <end position="410"/>
    </location>
</feature>
<feature type="helix" evidence="60">
    <location>
        <begin position="411"/>
        <end position="415"/>
    </location>
</feature>
<feature type="strand" evidence="60">
    <location>
        <begin position="419"/>
        <end position="421"/>
    </location>
</feature>
<feature type="strand" evidence="60">
    <location>
        <begin position="423"/>
        <end position="425"/>
    </location>
</feature>
<feature type="turn" evidence="63">
    <location>
        <begin position="445"/>
        <end position="448"/>
    </location>
</feature>
<feature type="helix" evidence="63">
    <location>
        <begin position="452"/>
        <end position="454"/>
    </location>
</feature>
<feature type="strand" evidence="63">
    <location>
        <begin position="456"/>
        <end position="461"/>
    </location>
</feature>
<feature type="helix" evidence="63">
    <location>
        <begin position="462"/>
        <end position="473"/>
    </location>
</feature>
<feature type="helix" evidence="63">
    <location>
        <begin position="476"/>
        <end position="478"/>
    </location>
</feature>
<feature type="strand" evidence="63">
    <location>
        <begin position="481"/>
        <end position="486"/>
    </location>
</feature>
<feature type="helix" evidence="63">
    <location>
        <begin position="493"/>
        <end position="495"/>
    </location>
</feature>
<feature type="helix" evidence="63">
    <location>
        <begin position="498"/>
        <end position="503"/>
    </location>
</feature>
<feature type="helix" evidence="63">
    <location>
        <begin position="505"/>
        <end position="514"/>
    </location>
</feature>
<feature type="strand" evidence="61">
    <location>
        <begin position="518"/>
        <end position="520"/>
    </location>
</feature>
<feature type="helix" evidence="63">
    <location>
        <begin position="525"/>
        <end position="528"/>
    </location>
</feature>
<feature type="strand" evidence="62">
    <location>
        <begin position="530"/>
        <end position="532"/>
    </location>
</feature>
<feature type="strand" evidence="63">
    <location>
        <begin position="534"/>
        <end position="539"/>
    </location>
</feature>
<feature type="helix" evidence="63">
    <location>
        <begin position="544"/>
        <end position="560"/>
    </location>
</feature>
<feature type="helix" evidence="63">
    <location>
        <begin position="564"/>
        <end position="566"/>
    </location>
</feature>
<feature type="strand" evidence="63">
    <location>
        <begin position="570"/>
        <end position="573"/>
    </location>
</feature>
<feature type="strand" evidence="63">
    <location>
        <begin position="577"/>
        <end position="582"/>
    </location>
</feature>
<feature type="strand" evidence="63">
    <location>
        <begin position="585"/>
        <end position="591"/>
    </location>
</feature>
<feature type="helix" evidence="63">
    <location>
        <begin position="592"/>
        <end position="601"/>
    </location>
</feature>
<feature type="helix" evidence="63">
    <location>
        <begin position="605"/>
        <end position="607"/>
    </location>
</feature>
<feature type="strand" evidence="63">
    <location>
        <begin position="608"/>
        <end position="612"/>
    </location>
</feature>
<feature type="helix" evidence="63">
    <location>
        <begin position="616"/>
        <end position="618"/>
    </location>
</feature>
<feature type="helix" evidence="63">
    <location>
        <begin position="621"/>
        <end position="629"/>
    </location>
</feature>
<feature type="helix" evidence="63">
    <location>
        <begin position="630"/>
        <end position="634"/>
    </location>
</feature>
<feature type="strand" evidence="63">
    <location>
        <begin position="635"/>
        <end position="639"/>
    </location>
</feature>
<feature type="helix" evidence="63">
    <location>
        <begin position="643"/>
        <end position="653"/>
    </location>
</feature>
<feature type="helix" evidence="63">
    <location>
        <begin position="658"/>
        <end position="677"/>
    </location>
</feature>
<feature type="strand" evidence="61">
    <location>
        <begin position="685"/>
        <end position="688"/>
    </location>
</feature>
<feature type="strand" evidence="63">
    <location>
        <begin position="692"/>
        <end position="694"/>
    </location>
</feature>
<feature type="helix" evidence="63">
    <location>
        <begin position="695"/>
        <end position="701"/>
    </location>
</feature>
<feature type="helix" evidence="63">
    <location>
        <begin position="704"/>
        <end position="714"/>
    </location>
</feature>
<feature type="turn" evidence="63">
    <location>
        <begin position="718"/>
        <end position="720"/>
    </location>
</feature>
<feature type="helix" evidence="63">
    <location>
        <begin position="724"/>
        <end position="736"/>
    </location>
</feature>
<feature type="helix" evidence="63">
    <location>
        <begin position="744"/>
        <end position="755"/>
    </location>
</feature>
<feature type="helix" evidence="63">
    <location>
        <begin position="761"/>
        <end position="772"/>
    </location>
</feature>
<feature type="turn" evidence="63">
    <location>
        <begin position="793"/>
        <end position="797"/>
    </location>
</feature>
<feature type="turn" evidence="63">
    <location>
        <begin position="803"/>
        <end position="805"/>
    </location>
</feature>
<feature type="helix" evidence="63">
    <location>
        <begin position="814"/>
        <end position="817"/>
    </location>
</feature>
<feature type="helix" evidence="63">
    <location>
        <begin position="820"/>
        <end position="825"/>
    </location>
</feature>
<feature type="strand" evidence="63">
    <location>
        <begin position="828"/>
        <end position="831"/>
    </location>
</feature>
<feature type="strand" evidence="63">
    <location>
        <begin position="834"/>
        <end position="839"/>
    </location>
</feature>
<feature type="helix" evidence="63">
    <location>
        <begin position="847"/>
        <end position="849"/>
    </location>
</feature>
<feature type="strand" evidence="63">
    <location>
        <begin position="853"/>
        <end position="856"/>
    </location>
</feature>
<feature type="strand" evidence="63">
    <location>
        <begin position="861"/>
        <end position="864"/>
    </location>
</feature>
<feature type="helix" evidence="63">
    <location>
        <begin position="869"/>
        <end position="881"/>
    </location>
</feature>
<feature type="strand" evidence="63">
    <location>
        <begin position="897"/>
        <end position="903"/>
    </location>
</feature>
<feature type="strand" evidence="63">
    <location>
        <begin position="906"/>
        <end position="910"/>
    </location>
</feature>
<feature type="strand" evidence="63">
    <location>
        <begin position="912"/>
        <end position="917"/>
    </location>
</feature>
<feature type="strand" evidence="63">
    <location>
        <begin position="920"/>
        <end position="925"/>
    </location>
</feature>
<feature type="helix" evidence="63">
    <location>
        <begin position="932"/>
        <end position="938"/>
    </location>
</feature>
<feature type="helix" evidence="63">
    <location>
        <begin position="940"/>
        <end position="945"/>
    </location>
</feature>
<feature type="strand" evidence="63">
    <location>
        <begin position="948"/>
        <end position="950"/>
    </location>
</feature>
<feature type="strand" evidence="63">
    <location>
        <begin position="955"/>
        <end position="959"/>
    </location>
</feature>
<feature type="strand" evidence="63">
    <location>
        <begin position="968"/>
        <end position="971"/>
    </location>
</feature>
<feature type="helix" evidence="63">
    <location>
        <begin position="974"/>
        <end position="983"/>
    </location>
</feature>
<feature type="helix" evidence="63">
    <location>
        <begin position="985"/>
        <end position="988"/>
    </location>
</feature>
<feature type="strand" evidence="63">
    <location>
        <begin position="992"/>
        <end position="996"/>
    </location>
</feature>
<feature type="strand" evidence="63">
    <location>
        <begin position="1001"/>
        <end position="1003"/>
    </location>
</feature>
<feature type="strand" evidence="63">
    <location>
        <begin position="1009"/>
        <end position="1011"/>
    </location>
</feature>
<feature type="helix" evidence="63">
    <location>
        <begin position="1015"/>
        <end position="1059"/>
    </location>
</feature>
<feature type="helix" evidence="63">
    <location>
        <begin position="1070"/>
        <end position="1079"/>
    </location>
</feature>
<feature type="helix" evidence="63">
    <location>
        <begin position="1086"/>
        <end position="1093"/>
    </location>
</feature>
<feature type="helix" evidence="63">
    <location>
        <begin position="1126"/>
        <end position="1129"/>
    </location>
</feature>
<feature type="helix" evidence="63">
    <location>
        <begin position="1133"/>
        <end position="1136"/>
    </location>
</feature>
<feature type="helix" evidence="63">
    <location>
        <begin position="1138"/>
        <end position="1159"/>
    </location>
</feature>
<feature type="helix" evidence="63">
    <location>
        <begin position="1163"/>
        <end position="1188"/>
    </location>
</feature>
<accession>P11388</accession>
<accession>B2RTS1</accession>
<accession>Q71UN1</accession>
<accession>Q71UQ5</accession>
<accession>Q9HB24</accession>
<accession>Q9HB25</accession>
<accession>Q9HB26</accession>
<accession>Q9UP44</accession>
<accession>Q9UQP9</accession>
<proteinExistence type="evidence at protein level"/>
<name>TOP2A_HUMAN</name>
<sequence>MEVSPLQPVNENMQVNKIKKNEDAKKRLSVERIYQKKTQLEHILLRPDTYIGSVELVTQQMWVYDEDVGINYREVTFVPGLYKIFDEILVNAADNKQRDPKMSCIRVTIDPENNLISIWNNGKGIPVVEHKVEKMYVPALIFGQLLTSSNYDDDEKKVTGGRNGYGAKLCNIFSTKFTVETASREYKKMFKQTWMDNMGRAGEMELKPFNGEDYTCITFQPDLSKFKMQSLDKDIVALMVRRAYDIAGSTKDVKVFLNGNKLPVKGFRSYVDMYLKDKLDETGNSLKVIHEQVNHRWEVCLTMSEKGFQQISFVNSIATSKGGRHVDYVADQIVTKLVDVVKKKNKGGVAVKAHQVKNHMWIFVNALIENPTFDSQTKENMTLQPKSFGSTCQLSEKFIKAAIGCGIVESILNWVKFKAQVQLNKKCSAVKHNRIKGIPKLDDANDAGGRNSTECTLILTEGDSAKTLAVSGLGVVGRDKYGVFPLRGKILNVREASHKQIMENAEINNIIKIVGLQYKKNYEDEDSLKTLRYGKIMIMTDQDQDGSHIKGLLINFIHHNWPSLLRHRFLEEFITPIVKVSKNKQEMAFYSLPEFEEWKSSTPNHKKWKVKYYKGLGTSTSKEAKEYFADMKRHRIQFKYSGPEDDAAISLAFSKKQIDDRKEWLTNFMEDRRQRKLLGLPEDYLYGQTTTYLTYNDFINKELILFSNSDNERSIPSMVDGLKPGQRKVLFTCFKRNDKREVKVAQLAGSVAEMSSYHHGEMSLMMTIINLAQNFVGSNNLNLLQPIGQFGTRLHGGKDSASPRYIFTMLSSLARLLFPPKDDHTLKFLYDDNQRVEPEWYIPIIPMVLINGAEGIGTGWSCKIPNFDVREIVNNIRRLMDGEEPLPMLPSYKNFKGTIEELAPNQYVISGEVAILNSTTIEISELPVRTWTQTYKEQVLEPMLNGTEKTPPLITDYREYHTDTTVKFVVKMTEEKLAEAERVGLHKVFKLQTSLTCNSMVLFDHVGCLKKYDTVLDILRDFFELRLKYYGLRKEWLLGMLGAESAKLNNQARFILEKIDGKIIIENKPKKELIKVLIQRGYDSDPVKAWKEAQQKVPDEEENEESDNEKETEKSDSVTDSGPTFNYLLDMPLWYLTKEKKDELCRLRNEKEQELDTLKRKSPSDLWKEDLATFIEELEAVEAKEKQDEQVGLPGKGGKAKGKKTQMAEVLPSPRGQRVIPRITIEMKAEAEKKNKKKIKNENTEGSPQEDGVELEGLKQRLEKKQKREPGTKTKKQTTLAFKPIKKGKKRNPWSDSESDRSSDESNFDVPPRETEPRRAATKTKFTMDLDSDEDFSDFDEKTDDEDFVPSDASPPKTKTSPKLSNKELKPQKSVVSDLEADDVKGSVPLSSSPPATHFPDETEITNPVPKKNVTVKKTAAKSQSSTSTTGAKKRAAPKGTKRDPALNSGVSQKPDPAKTKNRRKRKPSTSDDSDSNFEKIVSKAVTSKKSKGESDDFHMDFDSAVAPRAKSVRAKKPIKYLEESDEDDLF</sequence>
<comment type="function">
    <text evidence="4 14 16 21 22">Key decatenating enzyme that alters DNA topology by binding to two double-stranded DNA molecules, generating a double-stranded break in one of the strands, passing the intact strand through the broken strand, and religating the broken strand (PubMed:17567603, PubMed:18790802, PubMed:22013166, PubMed:22323612). May play a role in regulating the period length of BMAL1 transcriptional oscillation (By similarity).</text>
</comment>
<comment type="catalytic activity">
    <reaction evidence="5 18 19">
        <text>ATP-dependent breakage, passage and rejoining of double-stranded DNA.</text>
        <dbReference type="EC" id="5.6.2.2"/>
    </reaction>
</comment>
<comment type="cofactor">
    <cofactor evidence="37 38 39 40">
        <name>Mg(2+)</name>
        <dbReference type="ChEBI" id="CHEBI:18420"/>
    </cofactor>
    <cofactor evidence="37 38 39 40">
        <name>Mn(2+)</name>
        <dbReference type="ChEBI" id="CHEBI:29035"/>
    </cofactor>
    <cofactor evidence="37 38 39 40">
        <name>Ca(2+)</name>
        <dbReference type="ChEBI" id="CHEBI:29108"/>
    </cofactor>
    <text evidence="37 38 39 40">Binds two Mg(2+) per subunit. The magnesium ions form salt bridges with both the protein and the DNA. Can also accept other divalent metal cations, such as Mn(2+) or Ca(2+).</text>
</comment>
<comment type="activity regulation">
    <text>Specifically inhibited by the intercalating agent amsacrine.</text>
</comment>
<comment type="subunit">
    <text evidence="3 4 9 10 11 14 20 21 23 25 26 28 30">Homodimer. Interacts with COPS5. Interacts with RECQL5; this stimulates DNA decatenation. Interacts with SETMAR; stimulates the topoisomerase activity (PubMed:18790802, PubMed:20457750). Interacts with DHX9; this interaction occurs in a E2 enzyme UBE2I- and RNA-dependent manner, negatively regulates DHX9-mediated double-stranded DNA and RNA duplex helicase activity and stimulates TOP2A-mediated supercoiled DNA relaxation activity (PubMed:12711669). Interacts with HNRNPU (via C-terminus); this interaction protects the topoisomerase TOP2A from degradation and positively regulates the relaxation of supercoiled DNA in a RNA-dependent manner (By similarity). Interacts with MCM3AP isoform GANP (PubMed:23652018). Interacts with ERCC6 (PubMed:26030138). Interacts with PLSCR1 (PubMed:17567603). Interacts with GCNA; this interaction allows the resolution of topoisomerase II (TOP2A) DNA-protein cross-links (By similarity). Interacts with POL1RA/RPA1 (via dock II) and UBTF in the context of Pol I complex; may assist Pol I transcription initiation by releasing supercoils occurring during DNA unwinding. Interacts with TPRN; TPRN interacts with a number of DNA damage response proteins, is recruited to sites of DNA damage and may play a role in DNA damage repair (PubMed:23213405).</text>
</comment>
<comment type="interaction">
    <interactant intactId="EBI-539628">
        <id>P11388</id>
    </interactant>
    <interactant intactId="EBI-15956509">
        <id>O14497-1</id>
        <label>ARID1A</label>
    </interactant>
    <organismsDiffer>false</organismsDiffer>
    <experiments>2</experiments>
</comment>
<comment type="interaction">
    <interactant intactId="EBI-539628">
        <id>P11388</id>
    </interactant>
    <interactant intactId="EBI-349905">
        <id>P38398</id>
        <label>BRCA1</label>
    </interactant>
    <organismsDiffer>false</organismsDiffer>
    <experiments>3</experiments>
</comment>
<comment type="interaction">
    <interactant intactId="EBI-539628">
        <id>P11388</id>
    </interactant>
    <interactant intactId="EBI-491549">
        <id>P35222</id>
        <label>CTNNB1</label>
    </interactant>
    <organismsDiffer>false</organismsDiffer>
    <experiments>5</experiments>
</comment>
<comment type="interaction">
    <interactant intactId="EBI-539628">
        <id>P11388</id>
    </interactant>
    <interactant intactId="EBI-704279">
        <id>Q05655</id>
        <label>PRKCD</label>
    </interactant>
    <organismsDiffer>false</organismsDiffer>
    <experiments>10</experiments>
</comment>
<comment type="subcellular location">
    <subcellularLocation>
        <location evidence="32">Cytoplasm</location>
    </subcellularLocation>
    <subcellularLocation>
        <location evidence="31">Nucleus</location>
        <location evidence="31">Nucleoplasm</location>
    </subcellularLocation>
    <subcellularLocation>
        <location evidence="14 21 31 32">Nucleus</location>
    </subcellularLocation>
    <subcellularLocation>
        <location evidence="32">Nucleus</location>
        <location evidence="32">Nucleolus</location>
    </subcellularLocation>
</comment>
<comment type="alternative products">
    <event type="alternative splicing"/>
    <isoform>
        <id>P11388-1</id>
        <name>1</name>
        <sequence type="displayed"/>
    </isoform>
    <isoform>
        <id>P11388-2</id>
        <name>2</name>
        <sequence type="described" ref="VSP_006531"/>
    </isoform>
    <isoform>
        <id>P11388-3</id>
        <name>3</name>
        <sequence type="described" ref="VSP_006529"/>
    </isoform>
    <isoform>
        <id>P11388-4</id>
        <name>4</name>
        <sequence type="described" ref="VSP_006530"/>
    </isoform>
</comment>
<comment type="tissue specificity">
    <text evidence="32">Expressed in the tonsil, spleen, lymph node, thymus, skin, pancreas, testis, colon, kidney, liver, brain and lung (PubMed:9155056). Also found in high-grade lymphomas, squamous cell lung tumors and seminomas (PubMed:9155056).</text>
</comment>
<comment type="domain">
    <text evidence="2 27">The N-terminus has several structural domains; the ATPase domain (about residues 1-265), the transducer domain (about 266-428) and the toprim domain (455-572) (PubMed:25202966). Comparing different structures shows ATP hydrolysis induces domain shifts in the N-terminus that are probably part of the mechanism of DNA cleavage and rejoining (PubMed:25202966).</text>
</comment>
<comment type="PTM">
    <text evidence="8 15 17 34">Phosphorylation has no effect on catalytic activity. However, phosphorylation at Ser-1106 by CSNK1D/CK1 promotes DNA cleavable complex formation.</text>
</comment>
<comment type="PTM">
    <text evidence="29">(Microbial infection) Deubiquitinated by Epstein-Barr virus BPLF1; leading to stabilized SUMOylated TOP2A trapped in cleavage complexes, which halts the DNA damage response to TOP2A-induced double-strand DNA breaks.</text>
</comment>
<comment type="PTM">
    <text evidence="29">SUMOylated.</text>
</comment>
<comment type="miscellaneous">
    <text>Eukaryotic topoisomerase I and II can relax both negative and positive supercoils, whereas prokaryotic enzymes relax only negative supercoils.</text>
</comment>
<comment type="similarity">
    <text evidence="36">Belongs to the type II topoisomerase family.</text>
</comment>
<organism>
    <name type="scientific">Homo sapiens</name>
    <name type="common">Human</name>
    <dbReference type="NCBI Taxonomy" id="9606"/>
    <lineage>
        <taxon>Eukaryota</taxon>
        <taxon>Metazoa</taxon>
        <taxon>Chordata</taxon>
        <taxon>Craniata</taxon>
        <taxon>Vertebrata</taxon>
        <taxon>Euteleostomi</taxon>
        <taxon>Mammalia</taxon>
        <taxon>Eutheria</taxon>
        <taxon>Euarchontoglires</taxon>
        <taxon>Primates</taxon>
        <taxon>Haplorrhini</taxon>
        <taxon>Catarrhini</taxon>
        <taxon>Hominidae</taxon>
        <taxon>Homo</taxon>
    </lineage>
</organism>
<keyword id="KW-0002">3D-structure</keyword>
<keyword id="KW-0007">Acetylation</keyword>
<keyword id="KW-0025">Alternative splicing</keyword>
<keyword id="KW-0067">ATP-binding</keyword>
<keyword id="KW-0090">Biological rhythms</keyword>
<keyword id="KW-0963">Cytoplasm</keyword>
<keyword id="KW-0903">Direct protein sequencing</keyword>
<keyword id="KW-0238">DNA-binding</keyword>
<keyword id="KW-0413">Isomerase</keyword>
<keyword id="KW-1017">Isopeptide bond</keyword>
<keyword id="KW-0460">Magnesium</keyword>
<keyword id="KW-0479">Metal-binding</keyword>
<keyword id="KW-0547">Nucleotide-binding</keyword>
<keyword id="KW-0539">Nucleus</keyword>
<keyword id="KW-0597">Phosphoprotein</keyword>
<keyword id="KW-1267">Proteomics identification</keyword>
<keyword id="KW-1185">Reference proteome</keyword>
<keyword id="KW-0799">Topoisomerase</keyword>
<keyword id="KW-0832">Ubl conjugation</keyword>
<evidence type="ECO:0000250" key="1">
    <source>
        <dbReference type="UniProtKB" id="P06786"/>
    </source>
</evidence>
<evidence type="ECO:0000250" key="2">
    <source>
        <dbReference type="UniProtKB" id="P0AES6"/>
    </source>
</evidence>
<evidence type="ECO:0000250" key="3">
    <source>
        <dbReference type="UniProtKB" id="P41516"/>
    </source>
</evidence>
<evidence type="ECO:0000250" key="4">
    <source>
        <dbReference type="UniProtKB" id="Q01320"/>
    </source>
</evidence>
<evidence type="ECO:0000255" key="5">
    <source>
        <dbReference type="PROSITE-ProRule" id="PRU00995"/>
    </source>
</evidence>
<evidence type="ECO:0000255" key="6">
    <source>
        <dbReference type="PROSITE-ProRule" id="PRU01384"/>
    </source>
</evidence>
<evidence type="ECO:0000256" key="7">
    <source>
        <dbReference type="SAM" id="MobiDB-lite"/>
    </source>
</evidence>
<evidence type="ECO:0000269" key="8">
    <source>
    </source>
</evidence>
<evidence type="ECO:0000269" key="9">
    <source>
    </source>
</evidence>
<evidence type="ECO:0000269" key="10">
    <source>
    </source>
</evidence>
<evidence type="ECO:0000269" key="11">
    <source>
    </source>
</evidence>
<evidence type="ECO:0000269" key="12">
    <source>
    </source>
</evidence>
<evidence type="ECO:0000269" key="13">
    <source>
    </source>
</evidence>
<evidence type="ECO:0000269" key="14">
    <source>
    </source>
</evidence>
<evidence type="ECO:0000269" key="15">
    <source>
    </source>
</evidence>
<evidence type="ECO:0000269" key="16">
    <source>
    </source>
</evidence>
<evidence type="ECO:0000269" key="17">
    <source>
    </source>
</evidence>
<evidence type="ECO:0000269" key="18">
    <source>
    </source>
</evidence>
<evidence type="ECO:0000269" key="19">
    <source>
    </source>
</evidence>
<evidence type="ECO:0000269" key="20">
    <source>
    </source>
</evidence>
<evidence type="ECO:0000269" key="21">
    <source>
    </source>
</evidence>
<evidence type="ECO:0000269" key="22">
    <source>
    </source>
</evidence>
<evidence type="ECO:0000269" key="23">
    <source>
    </source>
</evidence>
<evidence type="ECO:0000269" key="24">
    <source>
    </source>
</evidence>
<evidence type="ECO:0000269" key="25">
    <source>
    </source>
</evidence>
<evidence type="ECO:0000269" key="26">
    <source>
    </source>
</evidence>
<evidence type="ECO:0000269" key="27">
    <source>
    </source>
</evidence>
<evidence type="ECO:0000269" key="28">
    <source>
    </source>
</evidence>
<evidence type="ECO:0000269" key="29">
    <source>
    </source>
</evidence>
<evidence type="ECO:0000269" key="30">
    <source>
    </source>
</evidence>
<evidence type="ECO:0000269" key="31">
    <source>
    </source>
</evidence>
<evidence type="ECO:0000269" key="32">
    <source>
    </source>
</evidence>
<evidence type="ECO:0000269" key="33">
    <source ref="10"/>
</evidence>
<evidence type="ECO:0000269" key="34">
    <source ref="11"/>
</evidence>
<evidence type="ECO:0000303" key="35">
    <source ref="8"/>
</evidence>
<evidence type="ECO:0000305" key="36"/>
<evidence type="ECO:0000305" key="37">
    <source>
    </source>
</evidence>
<evidence type="ECO:0000305" key="38">
    <source>
    </source>
</evidence>
<evidence type="ECO:0000305" key="39">
    <source>
    </source>
</evidence>
<evidence type="ECO:0000305" key="40">
    <source>
    </source>
</evidence>
<evidence type="ECO:0000305" key="41">
    <source>
    </source>
</evidence>
<evidence type="ECO:0000305" key="42">
    <source>
    </source>
</evidence>
<evidence type="ECO:0007744" key="43">
    <source>
    </source>
</evidence>
<evidence type="ECO:0007744" key="44">
    <source>
    </source>
</evidence>
<evidence type="ECO:0007744" key="45">
    <source>
    </source>
</evidence>
<evidence type="ECO:0007744" key="46">
    <source>
    </source>
</evidence>
<evidence type="ECO:0007744" key="47">
    <source>
    </source>
</evidence>
<evidence type="ECO:0007744" key="48">
    <source>
    </source>
</evidence>
<evidence type="ECO:0007744" key="49">
    <source>
    </source>
</evidence>
<evidence type="ECO:0007744" key="50">
    <source>
    </source>
</evidence>
<evidence type="ECO:0007744" key="51">
    <source>
    </source>
</evidence>
<evidence type="ECO:0007744" key="52">
    <source>
    </source>
</evidence>
<evidence type="ECO:0007744" key="53">
    <source>
    </source>
</evidence>
<evidence type="ECO:0007744" key="54">
    <source>
    </source>
</evidence>
<evidence type="ECO:0007744" key="55">
    <source>
    </source>
</evidence>
<evidence type="ECO:0007744" key="56">
    <source>
    </source>
</evidence>
<evidence type="ECO:0007744" key="57">
    <source>
    </source>
</evidence>
<evidence type="ECO:0007744" key="58">
    <source>
    </source>
</evidence>
<evidence type="ECO:0007829" key="59">
    <source>
        <dbReference type="PDB" id="1ZXM"/>
    </source>
</evidence>
<evidence type="ECO:0007829" key="60">
    <source>
        <dbReference type="PDB" id="1ZXN"/>
    </source>
</evidence>
<evidence type="ECO:0007829" key="61">
    <source>
        <dbReference type="PDB" id="4FM9"/>
    </source>
</evidence>
<evidence type="ECO:0007829" key="62">
    <source>
        <dbReference type="PDB" id="5GWK"/>
    </source>
</evidence>
<evidence type="ECO:0007829" key="63">
    <source>
        <dbReference type="PDB" id="8W50"/>
    </source>
</evidence>
<protein>
    <recommendedName>
        <fullName>DNA topoisomerase 2-alpha</fullName>
        <ecNumber evidence="5 18 19">5.6.2.2</ecNumber>
    </recommendedName>
    <alternativeName>
        <fullName>DNA topoisomerase II, alpha isozyme</fullName>
    </alternativeName>
</protein>
<gene>
    <name type="primary">TOP2A</name>
    <name type="synonym">TOP2</name>
</gene>